<name>LRP5_HUMAN</name>
<comment type="function">
    <text evidence="1 5 6 7 13 18 21 24 38 40 41">Acts as a coreceptor with members of the frizzled family of seven-transmembrane spanning receptors to transduce signal by Wnt proteins (PubMed:11336703, PubMed:11448771, PubMed:11719191, PubMed:15778503, PubMed:15908424, PubMed:16252235). Activates the canonical Wnt signaling pathway that controls cell fate determination and self-renewal during embryonic development and adult tissue regeneration (PubMed:11336703, PubMed:11719191). In particular, may play an important role in the development of the posterior patterning of the epiblast during gastrulation (By similarity). During bone development, regulates osteoblast proliferation and differentiation thus determining bone mass (PubMed:11719191). Mechanistically, the formation of the signaling complex between Wnt ligand, frizzled receptor and LRP5 coreceptor promotes the recruitment of AXIN1 to LRP5, stabilizing beta-catenin/CTNNB1 and activating TCF/LEF-mediated transcriptional programs (PubMed:11336703, PubMed:14731402, PubMed:24706814, PubMed:25920554). Acts as a coreceptor for non-Wnt proteins, such as norrin/NDP. Binding of norrin/NDP to frizzled 4/FZD4-LRP5 receptor complex triggers beta-catenin/CTNNB1-dependent signaling known to be required for retinal vascular development (PubMed:16252235, PubMed:27228167). Plays a role in controlling postnatal vascular regression in retina via macrophage-induced endothelial cell apoptosis (By similarity).</text>
</comment>
<comment type="subunit">
    <text evidence="1 5 6 13 16 18 21 25 30 32 35 37">Homodimer; disulfide-linked. Forms phosphorylated oligomer aggregates on Wnt-signaling (By similarity). Component of a Wnt-signaling complex that contains a WNT protein, a FZD protein and LRP5 or LRP6. Interacts with FZD8; the interaction is formed on WNT-binding and signaling (PubMed:11448771). Interacts (via the phosphorylated PPPSP motif domains) with AXIN1; the interaction prevents inhibition of beta-catenin phosphorylation and signaling and is enhanced in the presence of GSK3B and WNT1 or WNT3A (PubMed:11336703, PubMed:14731402). Interacts (via beta-propeller regions 3 and 4) with DKK1; the interaction, enhanced by MESD and/or KREMEN, inhibits beta-catenin signaling by preventing GSK3-mediated phosphorylation of the PPPSP motifs and subsequent, AXIN1 binding (PubMed:11448771, PubMed:15778503, PubMed:19746449). Interacts with MESD; the interaction prevents the formation of LRP5 aggregates, targets LRP5 to the plasma membrane and, when complexed with KREMEN2, increases DKK1 binding (PubMed:15143163, PubMed:17488095, PubMed:19746449). Interacts with CSNK1E (PubMed:16513652). Interacts with SOST; the interaction antagonizes canonical Wnt signaling (PubMed:15778503, PubMed:15908424). Interacts with APCDD1 (PubMed:20393562). Interacts with CAPRIN2 (PubMed:18762581).</text>
</comment>
<comment type="interaction">
    <interactant intactId="EBI-2466421">
        <id>O75197</id>
    </interactant>
    <interactant intactId="EBI-2683489">
        <id>Q8J025</id>
        <label>APCDD1</label>
    </interactant>
    <organismsDiffer>false</organismsDiffer>
    <experiments>3</experiments>
</comment>
<comment type="interaction">
    <interactant intactId="EBI-2466421">
        <id>O75197</id>
    </interactant>
    <interactant intactId="EBI-6918449">
        <id>Q6IMN6</id>
        <label>CAPRIN2</label>
    </interactant>
    <organismsDiffer>false</organismsDiffer>
    <experiments>3</experiments>
</comment>
<comment type="interaction">
    <interactant intactId="EBI-2466421">
        <id>O75197</id>
    </interactant>
    <interactant intactId="EBI-5746563">
        <id>Q9BQB4</id>
        <label>SOST</label>
    </interactant>
    <organismsDiffer>false</organismsDiffer>
    <experiments>5</experiments>
</comment>
<comment type="subcellular location">
    <subcellularLocation>
        <location evidence="1">Membrane</location>
        <topology evidence="1">Single-pass type I membrane protein</topology>
    </subcellularLocation>
    <subcellularLocation>
        <location evidence="40">Endoplasmic reticulum</location>
    </subcellularLocation>
    <text evidence="1">Chaperoned to the plasma membrane by MESD.</text>
</comment>
<comment type="tissue specificity">
    <text evidence="45">Widely expressed, with the highest level of expression in the liver and in aorta.</text>
</comment>
<comment type="PTM">
    <text>Phosphorylation of cytoplasmic PPPSP motifs regulates the signal transduction of the Wnt signaling pathway through acting as a docking site for AXIN1.</text>
</comment>
<comment type="polymorphism">
    <text evidence="8">Genetic variations in LRP5 define the bone mineral density quantitative trait locus 1 (BMND1) [MIM:601884]. Variance in bone mineral density influences bone mass and contributes to size determination in the general population.</text>
</comment>
<comment type="disease" evidence="41">
    <disease id="DI-01126">
        <name>Vitreoretinopathy, exudative 1</name>
        <acronym>EVR1</acronym>
        <description>A disorder of the retinal vasculature characterized by an abrupt cessation of growth of peripheral capillaries, leading to an avascular peripheral retina. This may lead to compensatory retinal neovascularization, which is thought to be induced by hypoxia from the initial avascular insult. New vessels are prone to leakage and rupture causing exudates and bleeding, followed by scarring, retinal detachment and blindness. Clinical features can be highly variable, even within the same family. Patients with mild forms of the disease are asymptomatic, and their only disease related abnormality is an arc of avascular retina in the extreme temporal periphery. In many ways the disease resembles retinopathy of prematurity but there is no evidence of prematurity or small birth weight in the patient history.</description>
        <dbReference type="MIM" id="133780"/>
    </disease>
    <text>The disease is caused by variants affecting the gene represented in this entry.</text>
</comment>
<comment type="disease" evidence="14 17 22 24 27 34 36 39">
    <disease id="DI-01128">
        <name>Vitreoretinopathy, exudative 4</name>
        <acronym>EVR4</acronym>
        <description>A disorder of the retinal vasculature characterized by an abrupt cessation of growth of peripheral capillaries, leading to an avascular peripheral retina. This may lead to compensatory retinal neovascularization, which is thought to be induced by hypoxia from the initial avascular insult. New vessels are prone to leakage and rupture causing exudates and bleeding, followed by scarring, retinal detachment and blindness. Clinical features can be highly variable, even within the same family. Patients with mild forms of the disease are asymptomatic, and their only disease related abnormality is an arc of avascular retina in the extreme temporal periphery.</description>
        <dbReference type="MIM" id="601813"/>
    </disease>
    <text>The disease is caused by variants affecting the gene represented in this entry.</text>
</comment>
<comment type="disease" evidence="12 19 23">
    <disease id="DI-02659">
        <name>Osteoporosis</name>
        <acronym>OSTEOP</acronym>
        <description>A systemic skeletal disorder characterized by decreased bone mass and deterioration of bone microarchitecture without alteration in the composition of bone. The result is fragile bones and an increased risk of fractures, even after minimal trauma. Osteoporosis is a chronic condition of multifactorial etiology and is usually clinically silent until a fracture occurs.</description>
        <dbReference type="MIM" id="166710"/>
    </disease>
    <text>Disease susceptibility is associated with variants affecting the gene represented in this entry.</text>
</comment>
<comment type="disease" evidence="7 24 26 29 31 42">
    <disease id="DI-02111">
        <name>Osteoporosis-pseudoglioma syndrome</name>
        <acronym>OPPG</acronym>
        <description>A disease characterized by congenital or infancy-onset blindness and severe juvenile-onset osteoporosis and spontaneous fractures. Additional clinical manifestations may include microphthalmos, abnormalities of the iris, lens or vitreous, cataracts, short stature, microcephaly, ligamental laxity, intellectual disability and hypotonia.</description>
        <dbReference type="MIM" id="259770"/>
    </disease>
    <text>The disease is caused by variants affecting the gene represented in this entry.</text>
</comment>
<comment type="disease" evidence="8 9 16 20 28">
    <disease id="DI-01741">
        <name>High bone mass trait</name>
        <acronym>HBM</acronym>
        <description>Rare phenotype characterized by exceptionally dense bones. HBM individuals show otherwise a completely normal skeletal structure and no other unusual clinical findings.</description>
        <dbReference type="MIM" id="601884"/>
    </disease>
    <text>The disease is caused by variants affecting the gene represented in this entry.</text>
</comment>
<comment type="disease" evidence="11">
    <disease id="DI-00450">
        <name>Endosteal hyperostosis, Worth type</name>
        <acronym>WENHY</acronym>
        <description>An autosomal dominant sclerosing bone dysplasia clinically characterized by elongation of the mandible, increased gonial angle, flattened forehead, and the presence of a slowly enlarging osseous prominence of the hard palate (torus palatinus). Serum calcium, phosphorus and alkaline phosphatase levels are normal. Radiologically, it is characterized by early thickening of the endosteum of long bones, the skull and of the mandible. With advancing age, the trabeculae of the metaphysis become thickened. WENHY becomes clinically and radiologically evident by adolescence, does not cause deformity except in the skull and mandible, and is not associated with bone pain or fracture. Affected patients have normal height, proportion, intelligence and longevity.</description>
        <dbReference type="MIM" id="144750"/>
    </disease>
    <text>The disease is caused by variants affecting the gene represented in this entry.</text>
</comment>
<comment type="disease" evidence="11">
    <disease id="DI-00884">
        <name>Osteopetrosis, autosomal dominant 1</name>
        <acronym>OPTA1</acronym>
        <description>A rare genetic disease characterized by abnormally dense bone, due to defective resorption of immature bone. Osteopetrosis occurs in two forms: a severe autosomal recessive form occurring in utero, infancy, or childhood, and a benign autosomal dominant form occurring in adolescence or adulthood. OPTA1 is an autosomal dominant form characterized by generalized osteosclerosis most pronounced in the cranial vault. Patients are often asymptomatic, but some suffer from pain and hearing loss. It appears to be the only type of osteopetrosis not associated with an increased fracture rate.</description>
        <dbReference type="MIM" id="607634"/>
    </disease>
    <text>The disease is caused by variants affecting the gene represented in this entry.</text>
</comment>
<comment type="disease" evidence="11">
    <disease id="DI-01122">
        <name>Van Buchem disease 2</name>
        <acronym>VBCH2</acronym>
        <description>VBCH2 is an autosomal dominant sclerosing bone dysplasia characterized by cranial osteosclerosis, thickened calvaria and cortices of long bones, enlarged mandible and normal serum alkaline phosphatase levels.</description>
        <dbReference type="MIM" id="607636"/>
    </disease>
    <text>The disease is caused by variants affecting the gene represented in this entry.</text>
</comment>
<comment type="disease" evidence="38 43">
    <disease id="DI-05195">
        <name>Polycystic liver disease 4 with or without kidney cysts</name>
        <acronym>PCLD4</acronym>
        <description>A form of polycystic liver disease, an autosomal dominant hepatobiliary disease characterized by overgrowth of biliary epithelium and supportive connective tissue, resulting in multiple liver cysts. PCLD4 patients may also develop kidney cysts that usually do not result in clinically significant renal disease.</description>
        <dbReference type="MIM" id="617875"/>
    </disease>
    <text>The disease is caused by variants affecting the gene represented in this entry.</text>
</comment>
<comment type="disease">
    <text evidence="40">LRP5 variations may act as a disease modifier in autosomal dominant polycystic kidney disease (ADPKD) in patients who have causative mutations in PKD1. May contribute to the disease phenotype heterogeneity and hepatic cystogenesis.</text>
</comment>
<comment type="similarity">
    <text evidence="49">Belongs to the LDLR family.</text>
</comment>
<comment type="online information" name="Atlas of Genetics and Cytogenetics in Oncology and Haematology">
    <link uri="https://atlasgeneticsoncology.org/gene/44282/LRP5"/>
</comment>
<keyword id="KW-0217">Developmental protein</keyword>
<keyword id="KW-0225">Disease variant</keyword>
<keyword id="KW-1015">Disulfide bond</keyword>
<keyword id="KW-0245">EGF-like domain</keyword>
<keyword id="KW-0254">Endocytosis</keyword>
<keyword id="KW-0256">Endoplasmic reticulum</keyword>
<keyword id="KW-0325">Glycoprotein</keyword>
<keyword id="KW-0472">Membrane</keyword>
<keyword id="KW-1065">Osteogenesis imperfecta</keyword>
<keyword id="KW-0987">Osteopetrosis</keyword>
<keyword id="KW-1285">Osteoporosis</keyword>
<keyword id="KW-0597">Phosphoprotein</keyword>
<keyword id="KW-1267">Proteomics identification</keyword>
<keyword id="KW-0675">Receptor</keyword>
<keyword id="KW-1185">Reference proteome</keyword>
<keyword id="KW-0677">Repeat</keyword>
<keyword id="KW-0732">Signal</keyword>
<keyword id="KW-0812">Transmembrane</keyword>
<keyword id="KW-1133">Transmembrane helix</keyword>
<keyword id="KW-0879">Wnt signaling pathway</keyword>
<dbReference type="EMBL" id="AF077820">
    <property type="protein sequence ID" value="AAC72791.1"/>
    <property type="molecule type" value="mRNA"/>
</dbReference>
<dbReference type="EMBL" id="AF064548">
    <property type="protein sequence ID" value="AAC36467.1"/>
    <property type="molecule type" value="mRNA"/>
</dbReference>
<dbReference type="EMBL" id="AF283321">
    <property type="protein sequence ID" value="AAK52433.1"/>
    <property type="molecule type" value="Genomic_DNA"/>
</dbReference>
<dbReference type="EMBL" id="AF283320">
    <property type="protein sequence ID" value="AAK52433.1"/>
    <property type="status" value="JOINED"/>
    <property type="molecule type" value="Genomic_DNA"/>
</dbReference>
<dbReference type="EMBL" id="AB017498">
    <property type="protein sequence ID" value="BAA33051.1"/>
    <property type="molecule type" value="mRNA"/>
</dbReference>
<dbReference type="EMBL" id="AP000807">
    <property type="status" value="NOT_ANNOTATED_CDS"/>
    <property type="molecule type" value="Genomic_DNA"/>
</dbReference>
<dbReference type="EMBL" id="CH471076">
    <property type="protein sequence ID" value="EAW74705.1"/>
    <property type="molecule type" value="Genomic_DNA"/>
</dbReference>
<dbReference type="EMBL" id="BC150595">
    <property type="protein sequence ID" value="AAI50596.1"/>
    <property type="molecule type" value="mRNA"/>
</dbReference>
<dbReference type="CCDS" id="CCDS8181.1"/>
<dbReference type="PIR" id="JE0372">
    <property type="entry name" value="JE0372"/>
</dbReference>
<dbReference type="RefSeq" id="NP_001278831.1">
    <property type="nucleotide sequence ID" value="NM_001291902.1"/>
</dbReference>
<dbReference type="RefSeq" id="NP_002326.2">
    <property type="nucleotide sequence ID" value="NM_002335.4"/>
</dbReference>
<dbReference type="SMR" id="O75197"/>
<dbReference type="BioGRID" id="110220">
    <property type="interactions" value="149"/>
</dbReference>
<dbReference type="CORUM" id="O75197"/>
<dbReference type="DIP" id="DIP-47265N"/>
<dbReference type="ELM" id="O75197"/>
<dbReference type="FunCoup" id="O75197">
    <property type="interactions" value="814"/>
</dbReference>
<dbReference type="IntAct" id="O75197">
    <property type="interactions" value="84"/>
</dbReference>
<dbReference type="MINT" id="O75197"/>
<dbReference type="STRING" id="9606.ENSP00000294304"/>
<dbReference type="ChEMBL" id="CHEMBL4295675"/>
<dbReference type="GlyConnect" id="1468">
    <property type="glycosylation" value="1 N-Linked glycan (1 site)"/>
</dbReference>
<dbReference type="GlyCosmos" id="O75197">
    <property type="glycosylation" value="6 sites, 1 glycan"/>
</dbReference>
<dbReference type="GlyGen" id="O75197">
    <property type="glycosylation" value="9 sites, 3 N-linked glycans (3 sites), 1 O-linked glycan (1 site)"/>
</dbReference>
<dbReference type="iPTMnet" id="O75197"/>
<dbReference type="PhosphoSitePlus" id="O75197"/>
<dbReference type="SwissPalm" id="O75197"/>
<dbReference type="BioMuta" id="LRP5"/>
<dbReference type="jPOST" id="O75197"/>
<dbReference type="MassIVE" id="O75197"/>
<dbReference type="PaxDb" id="9606-ENSP00000294304"/>
<dbReference type="PeptideAtlas" id="O75197"/>
<dbReference type="ProteomicsDB" id="49865"/>
<dbReference type="Pumba" id="O75197"/>
<dbReference type="ABCD" id="O75197">
    <property type="antibodies" value="4 sequenced antibodies"/>
</dbReference>
<dbReference type="Antibodypedia" id="4572">
    <property type="antibodies" value="424 antibodies from 36 providers"/>
</dbReference>
<dbReference type="DNASU" id="4041"/>
<dbReference type="Ensembl" id="ENST00000294304.12">
    <property type="protein sequence ID" value="ENSP00000294304.6"/>
    <property type="gene ID" value="ENSG00000162337.12"/>
</dbReference>
<dbReference type="GeneID" id="4041"/>
<dbReference type="KEGG" id="hsa:4041"/>
<dbReference type="MANE-Select" id="ENST00000294304.12">
    <property type="protein sequence ID" value="ENSP00000294304.6"/>
    <property type="RefSeq nucleotide sequence ID" value="NM_002335.4"/>
    <property type="RefSeq protein sequence ID" value="NP_002326.2"/>
</dbReference>
<dbReference type="UCSC" id="uc001ont.4">
    <property type="organism name" value="human"/>
</dbReference>
<dbReference type="AGR" id="HGNC:6697"/>
<dbReference type="CTD" id="4041"/>
<dbReference type="DisGeNET" id="4041"/>
<dbReference type="GeneCards" id="LRP5"/>
<dbReference type="HGNC" id="HGNC:6697">
    <property type="gene designation" value="LRP5"/>
</dbReference>
<dbReference type="HPA" id="ENSG00000162337">
    <property type="expression patterns" value="Tissue enhanced (liver)"/>
</dbReference>
<dbReference type="MalaCards" id="LRP5"/>
<dbReference type="MIM" id="133780">
    <property type="type" value="phenotype"/>
</dbReference>
<dbReference type="MIM" id="144750">
    <property type="type" value="phenotype"/>
</dbReference>
<dbReference type="MIM" id="166710">
    <property type="type" value="phenotype"/>
</dbReference>
<dbReference type="MIM" id="259770">
    <property type="type" value="phenotype"/>
</dbReference>
<dbReference type="MIM" id="601813">
    <property type="type" value="phenotype"/>
</dbReference>
<dbReference type="MIM" id="601884">
    <property type="type" value="phenotype"/>
</dbReference>
<dbReference type="MIM" id="603506">
    <property type="type" value="gene"/>
</dbReference>
<dbReference type="MIM" id="607634">
    <property type="type" value="phenotype"/>
</dbReference>
<dbReference type="MIM" id="607636">
    <property type="type" value="phenotype"/>
</dbReference>
<dbReference type="MIM" id="617875">
    <property type="type" value="phenotype"/>
</dbReference>
<dbReference type="neXtProt" id="NX_O75197"/>
<dbReference type="OpenTargets" id="ENSG00000162337"/>
<dbReference type="Orphanet" id="2783">
    <property type="disease" value="Autosomal dominant osteopetrosis type 1"/>
</dbReference>
<dbReference type="Orphanet" id="2790">
    <property type="disease" value="Endosteal hyperostosis, Worth type"/>
</dbReference>
<dbReference type="Orphanet" id="891">
    <property type="disease" value="Familial exudative vitreoretinopathy"/>
</dbReference>
<dbReference type="Orphanet" id="3416">
    <property type="disease" value="Hyperostosis corticalis generalisata"/>
</dbReference>
<dbReference type="Orphanet" id="2924">
    <property type="disease" value="Isolated polycystic liver disease"/>
</dbReference>
<dbReference type="Orphanet" id="498481">
    <property type="disease" value="LRP5-related primary osteoporosis"/>
</dbReference>
<dbReference type="Orphanet" id="2788">
    <property type="disease" value="Osteoporosis-pseudoglioma syndrome"/>
</dbReference>
<dbReference type="Orphanet" id="178377">
    <property type="disease" value="Osteosclerosis-developmental delay-craniosynostosis syndrome"/>
</dbReference>
<dbReference type="Orphanet" id="90050">
    <property type="disease" value="Retinopathy of prematurity"/>
</dbReference>
<dbReference type="PharmGKB" id="PA30455"/>
<dbReference type="VEuPathDB" id="HostDB:ENSG00000162337"/>
<dbReference type="eggNOG" id="KOG1215">
    <property type="taxonomic scope" value="Eukaryota"/>
</dbReference>
<dbReference type="GeneTree" id="ENSGT00940000156574"/>
<dbReference type="HOGENOM" id="CLU_002489_0_0_1"/>
<dbReference type="InParanoid" id="O75197"/>
<dbReference type="OMA" id="AIKQTRW"/>
<dbReference type="OrthoDB" id="72419at2759"/>
<dbReference type="PAN-GO" id="O75197">
    <property type="GO annotations" value="13 GO annotations based on evolutionary models"/>
</dbReference>
<dbReference type="PhylomeDB" id="O75197"/>
<dbReference type="TreeFam" id="TF315253"/>
<dbReference type="PathwayCommons" id="O75197"/>
<dbReference type="Reactome" id="R-HSA-201681">
    <property type="pathway name" value="TCF dependent signaling in response to WNT"/>
</dbReference>
<dbReference type="Reactome" id="R-HSA-3772470">
    <property type="pathway name" value="Negative regulation of TCF-dependent signaling by WNT ligand antagonists"/>
</dbReference>
<dbReference type="Reactome" id="R-HSA-4641262">
    <property type="pathway name" value="Disassembly of the destruction complex and recruitment of AXIN to the membrane"/>
</dbReference>
<dbReference type="Reactome" id="R-HSA-4641263">
    <property type="pathway name" value="Regulation of FZD by ubiquitination"/>
</dbReference>
<dbReference type="Reactome" id="R-HSA-5339717">
    <property type="pathway name" value="Signaling by LRP5 mutants"/>
</dbReference>
<dbReference type="Reactome" id="R-HSA-5340588">
    <property type="pathway name" value="Signaling by RNF43 mutants"/>
</dbReference>
<dbReference type="SignaLink" id="O75197"/>
<dbReference type="SIGNOR" id="O75197"/>
<dbReference type="BioGRID-ORCS" id="4041">
    <property type="hits" value="40 hits in 1155 CRISPR screens"/>
</dbReference>
<dbReference type="ChiTaRS" id="LRP5">
    <property type="organism name" value="human"/>
</dbReference>
<dbReference type="GeneWiki" id="LRP5"/>
<dbReference type="GenomeRNAi" id="4041"/>
<dbReference type="Pharos" id="O75197">
    <property type="development level" value="Tbio"/>
</dbReference>
<dbReference type="PRO" id="PR:O75197"/>
<dbReference type="Proteomes" id="UP000005640">
    <property type="component" value="Chromosome 11"/>
</dbReference>
<dbReference type="RNAct" id="O75197">
    <property type="molecule type" value="protein"/>
</dbReference>
<dbReference type="Bgee" id="ENSG00000162337">
    <property type="expression patterns" value="Expressed in right lobe of liver and 139 other cell types or tissues"/>
</dbReference>
<dbReference type="ExpressionAtlas" id="O75197">
    <property type="expression patterns" value="baseline and differential"/>
</dbReference>
<dbReference type="GO" id="GO:0005783">
    <property type="term" value="C:endoplasmic reticulum"/>
    <property type="evidence" value="ECO:0007669"/>
    <property type="project" value="UniProtKB-SubCell"/>
</dbReference>
<dbReference type="GO" id="GO:0005886">
    <property type="term" value="C:plasma membrane"/>
    <property type="evidence" value="ECO:0000314"/>
    <property type="project" value="BHF-UCL"/>
</dbReference>
<dbReference type="GO" id="GO:0043235">
    <property type="term" value="C:receptor complex"/>
    <property type="evidence" value="ECO:0000314"/>
    <property type="project" value="BHF-UCL"/>
</dbReference>
<dbReference type="GO" id="GO:1990909">
    <property type="term" value="C:Wnt signalosome"/>
    <property type="evidence" value="ECO:0000303"/>
    <property type="project" value="ParkinsonsUK-UCL"/>
</dbReference>
<dbReference type="GO" id="GO:1990851">
    <property type="term" value="C:Wnt-Frizzled-LRP5/6 complex"/>
    <property type="evidence" value="ECO:0000304"/>
    <property type="project" value="ParkinsonsUK-UCL"/>
</dbReference>
<dbReference type="GO" id="GO:0015026">
    <property type="term" value="F:coreceptor activity"/>
    <property type="evidence" value="ECO:0000353"/>
    <property type="project" value="ParkinsonsUK-UCL"/>
</dbReference>
<dbReference type="GO" id="GO:0042813">
    <property type="term" value="F:Wnt receptor activity"/>
    <property type="evidence" value="ECO:0000314"/>
    <property type="project" value="UniProtKB"/>
</dbReference>
<dbReference type="GO" id="GO:0017147">
    <property type="term" value="F:Wnt-protein binding"/>
    <property type="evidence" value="ECO:0000353"/>
    <property type="project" value="ParkinsonsUK-UCL"/>
</dbReference>
<dbReference type="GO" id="GO:0060612">
    <property type="term" value="P:adipose tissue development"/>
    <property type="evidence" value="ECO:0000315"/>
    <property type="project" value="BHF-UCL"/>
</dbReference>
<dbReference type="GO" id="GO:0006865">
    <property type="term" value="P:amino acid transport"/>
    <property type="evidence" value="ECO:0007669"/>
    <property type="project" value="Ensembl"/>
</dbReference>
<dbReference type="GO" id="GO:0060033">
    <property type="term" value="P:anatomical structure regression"/>
    <property type="evidence" value="ECO:0007669"/>
    <property type="project" value="Ensembl"/>
</dbReference>
<dbReference type="GO" id="GO:0009952">
    <property type="term" value="P:anterior/posterior pattern specification"/>
    <property type="evidence" value="ECO:0007669"/>
    <property type="project" value="Ensembl"/>
</dbReference>
<dbReference type="GO" id="GO:1902262">
    <property type="term" value="P:apoptotic process involved in blood vessel morphogenesis"/>
    <property type="evidence" value="ECO:0007669"/>
    <property type="project" value="Ensembl"/>
</dbReference>
<dbReference type="GO" id="GO:0048539">
    <property type="term" value="P:bone marrow development"/>
    <property type="evidence" value="ECO:0000315"/>
    <property type="project" value="BHF-UCL"/>
</dbReference>
<dbReference type="GO" id="GO:0060349">
    <property type="term" value="P:bone morphogenesis"/>
    <property type="evidence" value="ECO:0000315"/>
    <property type="project" value="BHF-UCL"/>
</dbReference>
<dbReference type="GO" id="GO:0046849">
    <property type="term" value="P:bone remodeling"/>
    <property type="evidence" value="ECO:0007669"/>
    <property type="project" value="Ensembl"/>
</dbReference>
<dbReference type="GO" id="GO:0060444">
    <property type="term" value="P:branching involved in mammary gland duct morphogenesis"/>
    <property type="evidence" value="ECO:0007669"/>
    <property type="project" value="Ensembl"/>
</dbReference>
<dbReference type="GO" id="GO:0060070">
    <property type="term" value="P:canonical Wnt signaling pathway"/>
    <property type="evidence" value="ECO:0000314"/>
    <property type="project" value="UniProtKB"/>
</dbReference>
<dbReference type="GO" id="GO:0042074">
    <property type="term" value="P:cell migration involved in gastrulation"/>
    <property type="evidence" value="ECO:0007669"/>
    <property type="project" value="Ensembl"/>
</dbReference>
<dbReference type="GO" id="GO:0098609">
    <property type="term" value="P:cell-cell adhesion"/>
    <property type="evidence" value="ECO:0007669"/>
    <property type="project" value="Ensembl"/>
</dbReference>
<dbReference type="GO" id="GO:0060764">
    <property type="term" value="P:cell-cell signaling involved in mammary gland development"/>
    <property type="evidence" value="ECO:0007669"/>
    <property type="project" value="Ensembl"/>
</dbReference>
<dbReference type="GO" id="GO:0042632">
    <property type="term" value="P:cholesterol homeostasis"/>
    <property type="evidence" value="ECO:0000315"/>
    <property type="project" value="BHF-UCL"/>
</dbReference>
<dbReference type="GO" id="GO:0008203">
    <property type="term" value="P:cholesterol metabolic process"/>
    <property type="evidence" value="ECO:0007669"/>
    <property type="project" value="Ensembl"/>
</dbReference>
<dbReference type="GO" id="GO:0042733">
    <property type="term" value="P:embryonic digit morphogenesis"/>
    <property type="evidence" value="ECO:0007669"/>
    <property type="project" value="Ensembl"/>
</dbReference>
<dbReference type="GO" id="GO:0006897">
    <property type="term" value="P:endocytosis"/>
    <property type="evidence" value="ECO:0007669"/>
    <property type="project" value="UniProtKB-KW"/>
</dbReference>
<dbReference type="GO" id="GO:0060856">
    <property type="term" value="P:establishment of blood-brain barrier"/>
    <property type="evidence" value="ECO:0007669"/>
    <property type="project" value="Ensembl"/>
</dbReference>
<dbReference type="GO" id="GO:1990963">
    <property type="term" value="P:establishment of blood-retinal barrier"/>
    <property type="evidence" value="ECO:0007669"/>
    <property type="project" value="Ensembl"/>
</dbReference>
<dbReference type="GO" id="GO:0035426">
    <property type="term" value="P:extracellular matrix-cell signaling"/>
    <property type="evidence" value="ECO:0007669"/>
    <property type="project" value="Ensembl"/>
</dbReference>
<dbReference type="GO" id="GO:0001702">
    <property type="term" value="P:gastrulation with mouth forming second"/>
    <property type="evidence" value="ECO:0007669"/>
    <property type="project" value="Ensembl"/>
</dbReference>
<dbReference type="GO" id="GO:0010467">
    <property type="term" value="P:gene expression"/>
    <property type="evidence" value="ECO:0007669"/>
    <property type="project" value="Ensembl"/>
</dbReference>
<dbReference type="GO" id="GO:0006007">
    <property type="term" value="P:glucose catabolic process"/>
    <property type="evidence" value="ECO:0000315"/>
    <property type="project" value="BHF-UCL"/>
</dbReference>
<dbReference type="GO" id="GO:0008078">
    <property type="term" value="P:mesodermal cell migration"/>
    <property type="evidence" value="ECO:0007669"/>
    <property type="project" value="Ensembl"/>
</dbReference>
<dbReference type="GO" id="GO:0045668">
    <property type="term" value="P:negative regulation of osteoblast differentiation"/>
    <property type="evidence" value="ECO:0000315"/>
    <property type="project" value="BHF-UCL"/>
</dbReference>
<dbReference type="GO" id="GO:0007399">
    <property type="term" value="P:nervous system development"/>
    <property type="evidence" value="ECO:0000318"/>
    <property type="project" value="GO_Central"/>
</dbReference>
<dbReference type="GO" id="GO:0110135">
    <property type="term" value="P:Norrin signaling pathway"/>
    <property type="evidence" value="ECO:0000314"/>
    <property type="project" value="BHF-UCL"/>
</dbReference>
<dbReference type="GO" id="GO:0002076">
    <property type="term" value="P:osteoblast development"/>
    <property type="evidence" value="ECO:0007669"/>
    <property type="project" value="Ensembl"/>
</dbReference>
<dbReference type="GO" id="GO:0033687">
    <property type="term" value="P:osteoblast proliferation"/>
    <property type="evidence" value="ECO:0007669"/>
    <property type="project" value="Ensembl"/>
</dbReference>
<dbReference type="GO" id="GO:0008284">
    <property type="term" value="P:positive regulation of cell population proliferation"/>
    <property type="evidence" value="ECO:0000314"/>
    <property type="project" value="BHF-UCL"/>
</dbReference>
<dbReference type="GO" id="GO:0045893">
    <property type="term" value="P:positive regulation of DNA-templated transcription"/>
    <property type="evidence" value="ECO:0000314"/>
    <property type="project" value="BHF-UCL"/>
</dbReference>
<dbReference type="GO" id="GO:0045600">
    <property type="term" value="P:positive regulation of fat cell differentiation"/>
    <property type="evidence" value="ECO:0000315"/>
    <property type="project" value="BHF-UCL"/>
</dbReference>
<dbReference type="GO" id="GO:0002053">
    <property type="term" value="P:positive regulation of mesenchymal cell proliferation"/>
    <property type="evidence" value="ECO:0000315"/>
    <property type="project" value="BHF-UCL"/>
</dbReference>
<dbReference type="GO" id="GO:0045840">
    <property type="term" value="P:positive regulation of mitotic nuclear division"/>
    <property type="evidence" value="ECO:0000314"/>
    <property type="project" value="BHF-UCL"/>
</dbReference>
<dbReference type="GO" id="GO:0045669">
    <property type="term" value="P:positive regulation of osteoblast differentiation"/>
    <property type="evidence" value="ECO:0000250"/>
    <property type="project" value="BHF-UCL"/>
</dbReference>
<dbReference type="GO" id="GO:0033690">
    <property type="term" value="P:positive regulation of osteoblast proliferation"/>
    <property type="evidence" value="ECO:0007669"/>
    <property type="project" value="Ensembl"/>
</dbReference>
<dbReference type="GO" id="GO:0045944">
    <property type="term" value="P:positive regulation of transcription by RNA polymerase II"/>
    <property type="evidence" value="ECO:0000314"/>
    <property type="project" value="BHF-UCL"/>
</dbReference>
<dbReference type="GO" id="GO:0042981">
    <property type="term" value="P:regulation of apoptotic process"/>
    <property type="evidence" value="ECO:0007669"/>
    <property type="project" value="Ensembl"/>
</dbReference>
<dbReference type="GO" id="GO:0008217">
    <property type="term" value="P:regulation of blood pressure"/>
    <property type="evidence" value="ECO:0000315"/>
    <property type="project" value="BHF-UCL"/>
</dbReference>
<dbReference type="GO" id="GO:0061178">
    <property type="term" value="P:regulation of insulin secretion involved in cellular response to glucose stimulus"/>
    <property type="evidence" value="ECO:0007669"/>
    <property type="project" value="Ensembl"/>
</dbReference>
<dbReference type="GO" id="GO:0043434">
    <property type="term" value="P:response to peptide hormone"/>
    <property type="evidence" value="ECO:0007669"/>
    <property type="project" value="Ensembl"/>
</dbReference>
<dbReference type="GO" id="GO:0060042">
    <property type="term" value="P:retina morphogenesis in camera-type eye"/>
    <property type="evidence" value="ECO:0000315"/>
    <property type="project" value="BHF-UCL"/>
</dbReference>
<dbReference type="GO" id="GO:0061304">
    <property type="term" value="P:retinal blood vessel morphogenesis"/>
    <property type="evidence" value="ECO:0000315"/>
    <property type="project" value="BHF-UCL"/>
</dbReference>
<dbReference type="GO" id="GO:0035019">
    <property type="term" value="P:somatic stem cell population maintenance"/>
    <property type="evidence" value="ECO:0007669"/>
    <property type="project" value="Ensembl"/>
</dbReference>
<dbReference type="CDD" id="cd00112">
    <property type="entry name" value="LDLa"/>
    <property type="match status" value="3"/>
</dbReference>
<dbReference type="FunFam" id="2.120.10.30:FF:000162">
    <property type="entry name" value="LDL receptor related protein 5 like"/>
    <property type="match status" value="1"/>
</dbReference>
<dbReference type="FunFam" id="2.10.25.10:FF:000314">
    <property type="entry name" value="Low-density lipoprotein receptor-related protein"/>
    <property type="match status" value="1"/>
</dbReference>
<dbReference type="FunFam" id="2.120.10.30:FF:000024">
    <property type="entry name" value="Low-density lipoprotein receptor-related protein"/>
    <property type="match status" value="1"/>
</dbReference>
<dbReference type="FunFam" id="4.10.400.10:FF:000076">
    <property type="entry name" value="Low-density lipoprotein receptor-related protein"/>
    <property type="match status" value="1"/>
</dbReference>
<dbReference type="FunFam" id="4.10.400.10:FF:000095">
    <property type="entry name" value="Low-density lipoprotein receptor-related protein"/>
    <property type="match status" value="1"/>
</dbReference>
<dbReference type="FunFam" id="2.120.10.30:FF:000001">
    <property type="entry name" value="Low-density lipoprotein receptor-related protein 6"/>
    <property type="match status" value="1"/>
</dbReference>
<dbReference type="FunFam" id="2.120.10.30:FF:000017">
    <property type="entry name" value="Low-density lipoprotein receptor-related protein 6"/>
    <property type="match status" value="1"/>
</dbReference>
<dbReference type="FunFam" id="4.10.400.10:FF:000016">
    <property type="entry name" value="Low-density lipoprotein receptor-related protein 6"/>
    <property type="match status" value="1"/>
</dbReference>
<dbReference type="Gene3D" id="2.10.25.10">
    <property type="entry name" value="Laminin"/>
    <property type="match status" value="1"/>
</dbReference>
<dbReference type="Gene3D" id="4.10.400.10">
    <property type="entry name" value="Low-density Lipoprotein Receptor"/>
    <property type="match status" value="3"/>
</dbReference>
<dbReference type="Gene3D" id="2.120.10.30">
    <property type="entry name" value="TolB, C-terminal domain"/>
    <property type="match status" value="4"/>
</dbReference>
<dbReference type="InterPro" id="IPR011042">
    <property type="entry name" value="6-blade_b-propeller_TolB-like"/>
</dbReference>
<dbReference type="InterPro" id="IPR050778">
    <property type="entry name" value="Cueball_EGF_LRP_Nidogen"/>
</dbReference>
<dbReference type="InterPro" id="IPR000742">
    <property type="entry name" value="EGF-like_dom"/>
</dbReference>
<dbReference type="InterPro" id="IPR036055">
    <property type="entry name" value="LDL_receptor-like_sf"/>
</dbReference>
<dbReference type="InterPro" id="IPR023415">
    <property type="entry name" value="LDLR_class-A_CS"/>
</dbReference>
<dbReference type="InterPro" id="IPR000033">
    <property type="entry name" value="LDLR_classB_rpt"/>
</dbReference>
<dbReference type="InterPro" id="IPR002172">
    <property type="entry name" value="LDrepeatLR_classA_rpt"/>
</dbReference>
<dbReference type="InterPro" id="IPR017049">
    <property type="entry name" value="LRP5/6"/>
</dbReference>
<dbReference type="PANTHER" id="PTHR46513:SF16">
    <property type="entry name" value="LOW-DENSITY LIPOPROTEIN RECEPTOR-RELATED PROTEIN 5"/>
    <property type="match status" value="1"/>
</dbReference>
<dbReference type="PANTHER" id="PTHR46513">
    <property type="entry name" value="VITELLOGENIN RECEPTOR-LIKE PROTEIN-RELATED-RELATED"/>
    <property type="match status" value="1"/>
</dbReference>
<dbReference type="Pfam" id="PF14670">
    <property type="entry name" value="FXa_inhibition"/>
    <property type="match status" value="3"/>
</dbReference>
<dbReference type="Pfam" id="PF00057">
    <property type="entry name" value="Ldl_recept_a"/>
    <property type="match status" value="3"/>
</dbReference>
<dbReference type="Pfam" id="PF00058">
    <property type="entry name" value="Ldl_recept_b"/>
    <property type="match status" value="12"/>
</dbReference>
<dbReference type="PIRSF" id="PIRSF036314">
    <property type="entry name" value="LDL_recpt-rel_p5/6"/>
    <property type="match status" value="1"/>
</dbReference>
<dbReference type="PRINTS" id="PR00261">
    <property type="entry name" value="LDLRECEPTOR"/>
</dbReference>
<dbReference type="SMART" id="SM00181">
    <property type="entry name" value="EGF"/>
    <property type="match status" value="4"/>
</dbReference>
<dbReference type="SMART" id="SM00192">
    <property type="entry name" value="LDLa"/>
    <property type="match status" value="3"/>
</dbReference>
<dbReference type="SMART" id="SM00135">
    <property type="entry name" value="LY"/>
    <property type="match status" value="20"/>
</dbReference>
<dbReference type="SUPFAM" id="SSF57196">
    <property type="entry name" value="EGF/Laminin"/>
    <property type="match status" value="4"/>
</dbReference>
<dbReference type="SUPFAM" id="SSF57424">
    <property type="entry name" value="LDL receptor-like module"/>
    <property type="match status" value="3"/>
</dbReference>
<dbReference type="SUPFAM" id="SSF63825">
    <property type="entry name" value="YWTD domain"/>
    <property type="match status" value="4"/>
</dbReference>
<dbReference type="PROSITE" id="PS01209">
    <property type="entry name" value="LDLRA_1"/>
    <property type="match status" value="3"/>
</dbReference>
<dbReference type="PROSITE" id="PS50068">
    <property type="entry name" value="LDLRA_2"/>
    <property type="match status" value="3"/>
</dbReference>
<dbReference type="PROSITE" id="PS51120">
    <property type="entry name" value="LDLRB"/>
    <property type="match status" value="20"/>
</dbReference>
<evidence type="ECO:0000250" key="1">
    <source>
        <dbReference type="UniProtKB" id="Q91VN0"/>
    </source>
</evidence>
<evidence type="ECO:0000255" key="2"/>
<evidence type="ECO:0000255" key="3">
    <source>
        <dbReference type="PROSITE-ProRule" id="PRU00124"/>
    </source>
</evidence>
<evidence type="ECO:0000256" key="4">
    <source>
        <dbReference type="SAM" id="MobiDB-lite"/>
    </source>
</evidence>
<evidence type="ECO:0000269" key="5">
    <source>
    </source>
</evidence>
<evidence type="ECO:0000269" key="6">
    <source>
    </source>
</evidence>
<evidence type="ECO:0000269" key="7">
    <source>
    </source>
</evidence>
<evidence type="ECO:0000269" key="8">
    <source>
    </source>
</evidence>
<evidence type="ECO:0000269" key="9">
    <source>
    </source>
</evidence>
<evidence type="ECO:0000269" key="10">
    <source>
    </source>
</evidence>
<evidence type="ECO:0000269" key="11">
    <source>
    </source>
</evidence>
<evidence type="ECO:0000269" key="12">
    <source>
    </source>
</evidence>
<evidence type="ECO:0000269" key="13">
    <source>
    </source>
</evidence>
<evidence type="ECO:0000269" key="14">
    <source>
    </source>
</evidence>
<evidence type="ECO:0000269" key="15">
    <source>
    </source>
</evidence>
<evidence type="ECO:0000269" key="16">
    <source>
    </source>
</evidence>
<evidence type="ECO:0000269" key="17">
    <source>
    </source>
</evidence>
<evidence type="ECO:0000269" key="18">
    <source>
    </source>
</evidence>
<evidence type="ECO:0000269" key="19">
    <source>
    </source>
</evidence>
<evidence type="ECO:0000269" key="20">
    <source>
    </source>
</evidence>
<evidence type="ECO:0000269" key="21">
    <source>
    </source>
</evidence>
<evidence type="ECO:0000269" key="22">
    <source>
    </source>
</evidence>
<evidence type="ECO:0000269" key="23">
    <source>
    </source>
</evidence>
<evidence type="ECO:0000269" key="24">
    <source>
    </source>
</evidence>
<evidence type="ECO:0000269" key="25">
    <source>
    </source>
</evidence>
<evidence type="ECO:0000269" key="26">
    <source>
    </source>
</evidence>
<evidence type="ECO:0000269" key="27">
    <source>
    </source>
</evidence>
<evidence type="ECO:0000269" key="28">
    <source>
    </source>
</evidence>
<evidence type="ECO:0000269" key="29">
    <source>
    </source>
</evidence>
<evidence type="ECO:0000269" key="30">
    <source>
    </source>
</evidence>
<evidence type="ECO:0000269" key="31">
    <source>
    </source>
</evidence>
<evidence type="ECO:0000269" key="32">
    <source>
    </source>
</evidence>
<evidence type="ECO:0000269" key="33">
    <source>
    </source>
</evidence>
<evidence type="ECO:0000269" key="34">
    <source>
    </source>
</evidence>
<evidence type="ECO:0000269" key="35">
    <source>
    </source>
</evidence>
<evidence type="ECO:0000269" key="36">
    <source>
    </source>
</evidence>
<evidence type="ECO:0000269" key="37">
    <source>
    </source>
</evidence>
<evidence type="ECO:0000269" key="38">
    <source>
    </source>
</evidence>
<evidence type="ECO:0000269" key="39">
    <source>
    </source>
</evidence>
<evidence type="ECO:0000269" key="40">
    <source>
    </source>
</evidence>
<evidence type="ECO:0000269" key="41">
    <source>
    </source>
</evidence>
<evidence type="ECO:0000269" key="42">
    <source>
    </source>
</evidence>
<evidence type="ECO:0000269" key="43">
    <source>
    </source>
</evidence>
<evidence type="ECO:0000269" key="44">
    <source>
    </source>
</evidence>
<evidence type="ECO:0000269" key="45">
    <source>
    </source>
</evidence>
<evidence type="ECO:0000303" key="46">
    <source>
    </source>
</evidence>
<evidence type="ECO:0000303" key="47">
    <source>
    </source>
</evidence>
<evidence type="ECO:0000303" key="48">
    <source>
    </source>
</evidence>
<evidence type="ECO:0000305" key="49"/>
<evidence type="ECO:0000312" key="50">
    <source>
        <dbReference type="HGNC" id="HGNC:6697"/>
    </source>
</evidence>
<proteinExistence type="evidence at protein level"/>
<feature type="signal peptide" evidence="2">
    <location>
        <begin position="1"/>
        <end position="31"/>
    </location>
</feature>
<feature type="chain" id="PRO_0000017328" description="Low-density lipoprotein receptor-related protein 5">
    <location>
        <begin position="32"/>
        <end position="1615"/>
    </location>
</feature>
<feature type="topological domain" description="Extracellular" evidence="2">
    <location>
        <begin position="32"/>
        <end position="1384"/>
    </location>
</feature>
<feature type="transmembrane region" description="Helical" evidence="2">
    <location>
        <begin position="1385"/>
        <end position="1407"/>
    </location>
</feature>
<feature type="topological domain" description="Cytoplasmic" evidence="2">
    <location>
        <begin position="1408"/>
        <end position="1615"/>
    </location>
</feature>
<feature type="repeat" description="LDL-receptor class B 1">
    <location>
        <begin position="75"/>
        <end position="119"/>
    </location>
</feature>
<feature type="repeat" description="YWTD 1">
    <location>
        <begin position="78"/>
        <end position="81"/>
    </location>
</feature>
<feature type="repeat" description="LDL-receptor class B 2">
    <location>
        <begin position="120"/>
        <end position="162"/>
    </location>
</feature>
<feature type="repeat" description="YWTD 2">
    <location>
        <begin position="123"/>
        <end position="126"/>
    </location>
</feature>
<feature type="repeat" description="LDL-receptor class B 3">
    <location>
        <begin position="163"/>
        <end position="206"/>
    </location>
</feature>
<feature type="repeat" description="YWTD 3">
    <location>
        <begin position="166"/>
        <end position="169"/>
    </location>
</feature>
<feature type="repeat" description="LDL-receptor class B 4">
    <location>
        <begin position="207"/>
        <end position="247"/>
    </location>
</feature>
<feature type="repeat" description="LDL-receptor class B 5">
    <location>
        <begin position="248"/>
        <end position="290"/>
    </location>
</feature>
<feature type="repeat" description="YWTD 4">
    <location>
        <begin position="251"/>
        <end position="254"/>
    </location>
</feature>
<feature type="domain" description="EGF-like 1">
    <location>
        <begin position="295"/>
        <end position="337"/>
    </location>
</feature>
<feature type="repeat" description="LDL-receptor class B 6">
    <location>
        <begin position="385"/>
        <end position="427"/>
    </location>
</feature>
<feature type="repeat" description="YWTD 5">
    <location>
        <begin position="388"/>
        <end position="391"/>
    </location>
</feature>
<feature type="repeat" description="LDL-receptor class B 7">
    <location>
        <begin position="428"/>
        <end position="470"/>
    </location>
</feature>
<feature type="repeat" description="YWTD 6">
    <location>
        <begin position="431"/>
        <end position="434"/>
    </location>
</feature>
<feature type="repeat" description="LDL-receptor class B 8">
    <location>
        <begin position="471"/>
        <end position="514"/>
    </location>
</feature>
<feature type="repeat" description="YWTD 7">
    <location>
        <begin position="474"/>
        <end position="477"/>
    </location>
</feature>
<feature type="repeat" description="LDL-receptor class B 9">
    <location>
        <begin position="515"/>
        <end position="557"/>
    </location>
</feature>
<feature type="repeat" description="LDL-receptor class B 10">
    <location>
        <begin position="558"/>
        <end position="600"/>
    </location>
</feature>
<feature type="repeat" description="YWTD 8">
    <location>
        <begin position="559"/>
        <end position="562"/>
    </location>
</feature>
<feature type="domain" description="EGF-like 2">
    <location>
        <begin position="601"/>
        <end position="641"/>
    </location>
</feature>
<feature type="repeat" description="LDL-receptor class B 11">
    <location>
        <begin position="687"/>
        <end position="729"/>
    </location>
</feature>
<feature type="repeat" description="YWTD 9">
    <location>
        <begin position="690"/>
        <end position="693"/>
    </location>
</feature>
<feature type="repeat" description="LDL-receptor class B 12">
    <location>
        <begin position="730"/>
        <end position="772"/>
    </location>
</feature>
<feature type="repeat" description="LDL-receptor class B 13">
    <location>
        <begin position="773"/>
        <end position="815"/>
    </location>
</feature>
<feature type="repeat" description="LDL-receptor class B 14">
    <location>
        <begin position="816"/>
        <end position="855"/>
    </location>
</feature>
<feature type="repeat" description="YWTD 10">
    <location>
        <begin position="819"/>
        <end position="822"/>
    </location>
</feature>
<feature type="repeat" description="LDL-receptor class B 15">
    <location>
        <begin position="856"/>
        <end position="898"/>
    </location>
</feature>
<feature type="repeat" description="YWTD 11">
    <location>
        <begin position="859"/>
        <end position="862"/>
    </location>
</feature>
<feature type="domain" description="EGF-like 3">
    <location>
        <begin position="902"/>
        <end position="942"/>
    </location>
</feature>
<feature type="repeat" description="LDL-receptor class B 16">
    <location>
        <begin position="989"/>
        <end position="1035"/>
    </location>
</feature>
<feature type="repeat" description="LDL-receptor class B 17">
    <location>
        <begin position="1036"/>
        <end position="1078"/>
    </location>
</feature>
<feature type="repeat" description="LDL-receptor class B 18">
    <location>
        <begin position="1079"/>
        <end position="1123"/>
    </location>
</feature>
<feature type="repeat" description="LDL-receptor class B 19">
    <location>
        <begin position="1124"/>
        <end position="1164"/>
    </location>
</feature>
<feature type="repeat" description="LDL-receptor class B 20">
    <location>
        <begin position="1165"/>
        <end position="1207"/>
    </location>
</feature>
<feature type="domain" description="EGF-like 4">
    <location>
        <begin position="1213"/>
        <end position="1254"/>
    </location>
</feature>
<feature type="domain" description="LDL-receptor class A 1" evidence="3">
    <location>
        <begin position="1258"/>
        <end position="1296"/>
    </location>
</feature>
<feature type="domain" description="LDL-receptor class A 2" evidence="3">
    <location>
        <begin position="1297"/>
        <end position="1333"/>
    </location>
</feature>
<feature type="domain" description="LDL-receptor class A 3" evidence="3">
    <location>
        <begin position="1335"/>
        <end position="1371"/>
    </location>
</feature>
<feature type="region of interest" description="Beta-propeller 1">
    <location>
        <begin position="32"/>
        <end position="288"/>
    </location>
</feature>
<feature type="region of interest" description="Beta-propeller 2">
    <location>
        <begin position="341"/>
        <end position="602"/>
    </location>
</feature>
<feature type="region of interest" description="Beta-propeller 3">
    <location>
        <begin position="644"/>
        <end position="903"/>
    </location>
</feature>
<feature type="region of interest" description="Beta-propeller 4">
    <location>
        <begin position="945"/>
        <end position="1212"/>
    </location>
</feature>
<feature type="region of interest" description="Disordered" evidence="4">
    <location>
        <begin position="1475"/>
        <end position="1501"/>
    </location>
</feature>
<feature type="region of interest" description="Disordered" evidence="4">
    <location>
        <begin position="1568"/>
        <end position="1615"/>
    </location>
</feature>
<feature type="short sequence motif" description="PPPSP motif A">
    <location>
        <begin position="1500"/>
        <end position="1506"/>
    </location>
</feature>
<feature type="short sequence motif" description="PPPSP motif B">
    <location>
        <begin position="1538"/>
        <end position="1545"/>
    </location>
</feature>
<feature type="short sequence motif" description="PPPSP motif C">
    <location>
        <begin position="1574"/>
        <end position="1581"/>
    </location>
</feature>
<feature type="short sequence motif" description="PPPSP motif D">
    <location>
        <begin position="1591"/>
        <end position="1596"/>
    </location>
</feature>
<feature type="short sequence motif" description="PPPSP motif E">
    <location>
        <begin position="1605"/>
        <end position="1612"/>
    </location>
</feature>
<feature type="compositionally biased region" description="Pro residues" evidence="4">
    <location>
        <begin position="1604"/>
        <end position="1615"/>
    </location>
</feature>
<feature type="glycosylation site" description="N-linked (GlcNAc...) asparagine" evidence="2">
    <location>
        <position position="93"/>
    </location>
</feature>
<feature type="glycosylation site" description="N-linked (GlcNAc...) asparagine" evidence="2">
    <location>
        <position position="138"/>
    </location>
</feature>
<feature type="glycosylation site" description="N-linked (GlcNAc...) asparagine" evidence="2">
    <location>
        <position position="446"/>
    </location>
</feature>
<feature type="glycosylation site" description="N-linked (GlcNAc...) asparagine" evidence="2">
    <location>
        <position position="499"/>
    </location>
</feature>
<feature type="glycosylation site" description="N-linked (GlcNAc...) asparagine" evidence="2">
    <location>
        <position position="705"/>
    </location>
</feature>
<feature type="glycosylation site" description="N-linked (GlcNAc...) asparagine" evidence="2">
    <location>
        <position position="878"/>
    </location>
</feature>
<feature type="disulfide bond" evidence="3">
    <location>
        <begin position="299"/>
        <end position="310"/>
    </location>
</feature>
<feature type="disulfide bond" evidence="3">
    <location>
        <begin position="306"/>
        <end position="321"/>
    </location>
</feature>
<feature type="disulfide bond" evidence="3">
    <location>
        <begin position="323"/>
        <end position="336"/>
    </location>
</feature>
<feature type="disulfide bond" evidence="3">
    <location>
        <begin position="605"/>
        <end position="616"/>
    </location>
</feature>
<feature type="disulfide bond" evidence="3">
    <location>
        <begin position="612"/>
        <end position="625"/>
    </location>
</feature>
<feature type="disulfide bond" evidence="3">
    <location>
        <begin position="627"/>
        <end position="640"/>
    </location>
</feature>
<feature type="disulfide bond" evidence="3">
    <location>
        <begin position="906"/>
        <end position="917"/>
    </location>
</feature>
<feature type="disulfide bond" evidence="3">
    <location>
        <begin position="913"/>
        <end position="926"/>
    </location>
</feature>
<feature type="disulfide bond" evidence="3">
    <location>
        <begin position="928"/>
        <end position="941"/>
    </location>
</feature>
<feature type="disulfide bond" evidence="3">
    <location>
        <begin position="1217"/>
        <end position="1228"/>
    </location>
</feature>
<feature type="disulfide bond" evidence="3">
    <location>
        <begin position="1224"/>
        <end position="1238"/>
    </location>
</feature>
<feature type="disulfide bond" evidence="3">
    <location>
        <begin position="1240"/>
        <end position="1253"/>
    </location>
</feature>
<feature type="disulfide bond" evidence="3">
    <location>
        <begin position="1259"/>
        <end position="1273"/>
    </location>
</feature>
<feature type="disulfide bond" evidence="3">
    <location>
        <begin position="1266"/>
        <end position="1286"/>
    </location>
</feature>
<feature type="disulfide bond" evidence="3">
    <location>
        <begin position="1280"/>
        <end position="1295"/>
    </location>
</feature>
<feature type="disulfide bond" evidence="3">
    <location>
        <begin position="1298"/>
        <end position="1310"/>
    </location>
</feature>
<feature type="disulfide bond" evidence="3">
    <location>
        <begin position="1305"/>
        <end position="1323"/>
    </location>
</feature>
<feature type="disulfide bond" evidence="3">
    <location>
        <begin position="1317"/>
        <end position="1332"/>
    </location>
</feature>
<feature type="disulfide bond" evidence="3">
    <location>
        <begin position="1336"/>
        <end position="1348"/>
    </location>
</feature>
<feature type="disulfide bond" evidence="3">
    <location>
        <begin position="1343"/>
        <end position="1361"/>
    </location>
</feature>
<feature type="disulfide bond" evidence="3">
    <location>
        <begin position="1355"/>
        <end position="1370"/>
    </location>
</feature>
<feature type="sequence variant" id="VAR_058582" description="In OPPG; uncertain significance; impairs protein trafficking to the endoplasmic reticulum and cell membrane." evidence="33">
    <location>
        <begin position="15"/>
        <end position="20"/>
    </location>
</feature>
<feature type="sequence variant" id="VAR_021804" evidence="11">
    <location>
        <begin position="18"/>
        <end position="20"/>
    </location>
</feature>
<feature type="sequence variant" id="VAR_021805" evidence="11">
    <original>L</original>
    <variation>LL</variation>
    <location>
        <position position="20"/>
    </location>
</feature>
<feature type="sequence variant" id="VAR_063941" description="In OSTEOP; uncertain significance." evidence="19">
    <original>A</original>
    <variation>T</variation>
    <location>
        <position position="29"/>
    </location>
</feature>
<feature type="sequence variant" id="VAR_085732" description="In OPPG; uncertain significance; dbSNP:rs1197978360." evidence="42">
    <original>W</original>
    <variation>R</variation>
    <location>
        <position position="79"/>
    </location>
</feature>
<feature type="sequence variant" id="VAR_021806" description="In dbSNP:rs41494349." evidence="11 12">
    <original>Q</original>
    <variation>R</variation>
    <location>
        <position position="89"/>
    </location>
</feature>
<feature type="sequence variant" id="VAR_063942" description="In dbSNP:rs143433231." evidence="22">
    <original>A</original>
    <variation>V</variation>
    <location>
        <position position="97"/>
    </location>
</feature>
<feature type="sequence variant" id="VAR_021807" description="In OPTA1; dbSNP:rs2153129547." evidence="11">
    <original>D</original>
    <variation>Y</variation>
    <location>
        <position position="111"/>
    </location>
</feature>
<feature type="sequence variant" id="VAR_085733" description="In OPPG; uncertain significance; dbSNP:rs368198391." evidence="42">
    <original>R</original>
    <variation>Q</variation>
    <location>
        <position position="142"/>
    </location>
</feature>
<feature type="sequence variant" id="VAR_063943" description="In EVR4; dbSNP:rs80358305." evidence="22">
    <original>L</original>
    <variation>F</variation>
    <location>
        <position position="145"/>
    </location>
</feature>
<feature type="sequence variant" id="VAR_063944" description="In HBM." evidence="20">
    <original>R</original>
    <variation>M</variation>
    <location>
        <position position="154"/>
    </location>
</feature>
<feature type="sequence variant" id="VAR_021808" description="In OPTA1; dbSNP:rs121908669." evidence="11">
    <original>G</original>
    <variation>R</variation>
    <location>
        <position position="171"/>
    </location>
</feature>
<feature type="sequence variant" id="VAR_021809" description="In HBM; also in HBM individuals with enlarged mandible and torus palatinus; abolishes interaction with MESD; impairs transport to cell surface; no enhancement of DKK1 binding by MESD resulting in impaired inhibition of Wnt signaling by DKK1; dbSNP:rs121908668." evidence="8 9 16 35">
    <original>G</original>
    <variation>V</variation>
    <location>
        <position position="171"/>
    </location>
</feature>
<feature type="sequence variant" id="VAR_018465" description="In EVR4; an individual with abnormal retinal vasculature and retinal folds; dbSNP:rs80358306." evidence="14 24">
    <original>T</original>
    <variation>M</variation>
    <location>
        <position position="173"/>
    </location>
</feature>
<feature type="sequence variant" id="VAR_063945" description="In OPPG; dbSNP:rs760548029." evidence="24">
    <original>D</original>
    <variation>N</variation>
    <location>
        <position position="203"/>
    </location>
</feature>
<feature type="sequence variant" id="VAR_021810" description="In WENHY; dbSNP:rs121908671." evidence="11">
    <original>A</original>
    <variation>T</variation>
    <location>
        <position position="214"/>
    </location>
</feature>
<feature type="sequence variant" id="VAR_021811" description="In WENHY; dbSNP:rs121908672." evidence="11">
    <original>A</original>
    <variation>V</variation>
    <location>
        <position position="214"/>
    </location>
</feature>
<feature type="sequence variant" id="VAR_021812" description="In OPTA1, VBCH2 and WENHY; dbSNP:rs121908670." evidence="11">
    <original>A</original>
    <variation>T</variation>
    <location>
        <position position="242"/>
    </location>
</feature>
<feature type="sequence variant" id="VAR_063946" description="In OPPG; appears to traffic less well than does the wild-type protein; appears to be post-translationally modified similar to wild-type protein; is unable to transduce Wnt signal; has a significantly reduced ability to transduce Norrin signal; dbSNP:rs397514665." evidence="24">
    <original>T</original>
    <variation>M</variation>
    <location>
        <position position="244"/>
    </location>
</feature>
<feature type="sequence variant" id="VAR_021813" description="In OPTA1; dbSNP:rs121908673." evidence="11">
    <original>T</original>
    <variation>I</variation>
    <location>
        <position position="253"/>
    </location>
</feature>
<feature type="sequence variant" id="VAR_063412" description="In HBM; uncertain significance; lowered LRP5-mediated Wnt signaling; no effect on DKK1 binding." evidence="28">
    <original>M</original>
    <variation>V</variation>
    <location>
        <position position="282"/>
    </location>
</feature>
<feature type="sequence variant" id="VAR_063947" description="In OPPG; dbSNP:rs1219101402." evidence="24">
    <original>S</original>
    <variation>F</variation>
    <location>
        <position position="307"/>
    </location>
</feature>
<feature type="sequence variant" id="VAR_063948" description="In OPPG and EVR1; reduces Norrin signal transduction; dbSNP:rs1320065036." evidence="24 41">
    <original>R</original>
    <variation>W</variation>
    <location>
        <position position="348"/>
    </location>
</feature>
<feature type="sequence variant" id="VAR_063949" description="In OPPG; dbSNP:rs2153153067." evidence="24">
    <original>R</original>
    <variation>Q</variation>
    <location>
        <position position="353"/>
    </location>
</feature>
<feature type="sequence variant" id="VAR_063950" description="In OSTEOP and OPPG; appears to traffic comparably than does the wild-type protein; appears to be post-translationally modified similar to wild-type protein; is unable to transduce Wnt signal; has a significantly reduced ability to transduce Norrin signal; dbSNP:rs1158745675." evidence="23 24">
    <original>S</original>
    <variation>L</variation>
    <location>
        <position position="356"/>
    </location>
</feature>
<feature type="sequence variant" id="VAR_076548" description="In EVR1; reduces Norrin signal transduction; dbSNP:rs1332274863." evidence="41">
    <original>D</original>
    <variation>N</variation>
    <location>
        <position position="381"/>
    </location>
</feature>
<feature type="sequence variant" id="VAR_063951" description="In OPPG; is unable to traffic normally; appears to be post-translationally modified similar to wild-type protein; is unable to transduce Wnt signal; has a significantly reduced ability to transduce Norrin signal; dbSNP:rs2098643093." evidence="24">
    <original>T</original>
    <variation>K</variation>
    <location>
        <position position="390"/>
    </location>
</feature>
<feature type="sequence variant" id="VAR_063952" description="In OPPG; dbSNP:rs201320326." evidence="24">
    <original>A</original>
    <variation>E</variation>
    <location>
        <position position="400"/>
    </location>
</feature>
<feature type="sequence variant" id="VAR_063953" description="In OPPG; appears to traffic less well than does the wild-type protein; appears to be post-translationally modified similar to wild-type protein; has 50% of wild-type activity to transduce Wnt signal; has a significantly reduced ability to transduce Norrin signal; dbSNP:rs750791263." evidence="24">
    <original>G</original>
    <variation>R</variation>
    <location>
        <position position="404"/>
    </location>
</feature>
<feature type="sequence variant" id="VAR_063954" description="In OPPG; dbSNP:rs1273567061." evidence="31">
    <original>T</original>
    <variation>A</variation>
    <location>
        <position position="409"/>
    </location>
</feature>
<feature type="sequence variant" id="VAR_071012" description="In EVR4; the mutation results in significantly reduced Norrin signal transduction; dbSNP:rs774342727." evidence="39">
    <original>A</original>
    <variation>T</variation>
    <location>
        <position position="422"/>
    </location>
</feature>
<feature type="sequence variant" id="VAR_063955" description="In OPPG; uncertain significance; appears to traffic less well than does the wild-type protein; appears to be post-translationally modified similar to wild-type protein; has 50% of wild-type activity to transduce Wnt signal; has a significantly reduced ability to transduce Norrin signal; dbSNP:rs757888034." evidence="24 42">
    <original>D</original>
    <variation>N</variation>
    <location>
        <position position="434"/>
    </location>
</feature>
<feature type="sequence variant" id="VAR_063956" description="In EVR4; dbSNP:rs376152274." evidence="36">
    <original>E</original>
    <variation>K</variation>
    <location>
        <position position="441"/>
    </location>
</feature>
<feature type="sequence variant" id="VAR_063957" description="In EVR4; dbSNP:rs80358308." evidence="22">
    <original>R</original>
    <variation>C</variation>
    <location>
        <position position="444"/>
    </location>
</feature>
<feature type="sequence variant" id="VAR_080857" description="In PCLD4; uncertain significance; dbSNP:rs373910016." evidence="38">
    <original>V</original>
    <variation>M</variation>
    <location>
        <position position="454"/>
    </location>
</feature>
<feature type="sequence variant" id="VAR_063958" description="In OSTEOP; uncertain significance; shows an inhibitory effect on Wnt signal transduction; dbSNP:rs930355318." evidence="23">
    <original>S</original>
    <variation>L</variation>
    <location>
        <position position="455"/>
    </location>
</feature>
<feature type="sequence variant" id="VAR_063959" description="In OPPG; dbSNP:rs866606166." evidence="24">
    <original>E</original>
    <variation>K</variation>
    <location>
        <position position="460"/>
    </location>
</feature>
<feature type="sequence variant" id="VAR_063960" description="In OPPG; dbSNP:rs1318906451." evidence="26">
    <original>W</original>
    <variation>R</variation>
    <location>
        <position position="478"/>
    </location>
</feature>
<feature type="sequence variant" id="VAR_021814" description="In OPPG; dbSNP:rs121908664." evidence="7 24">
    <original>R</original>
    <variation>Q</variation>
    <location>
        <position position="494"/>
    </location>
</feature>
<feature type="sequence variant" id="VAR_063961" description="In OPPG; dbSNP:rs545508982." evidence="26">
    <original>W</original>
    <variation>C</variation>
    <location>
        <position position="504"/>
    </location>
</feature>
<feature type="sequence variant" id="VAR_063962" description="In EVR4; dbSNP:rs1245625202." evidence="34">
    <original>D</original>
    <variation>A</variation>
    <location>
        <position position="511"/>
    </location>
</feature>
<feature type="sequence variant" id="VAR_063963" description="In OPPG; appears to traffic comparably than does the wild-type protein; appears to be post-translationally modified similar to wild-type protein; is unable to transduce Wnt signal; has a significantly reduced ability to transduce Norrin signal." evidence="24">
    <original>G</original>
    <variation>V</variation>
    <location>
        <position position="520"/>
    </location>
</feature>
<feature type="sequence variant" id="VAR_063964" description="In EVR4; dbSNP:rs80358309." evidence="22">
    <original>A</original>
    <variation>T</variation>
    <location>
        <position position="522"/>
    </location>
</feature>
<feature type="sequence variant" id="VAR_063965" description="In OPPG." evidence="29">
    <original>N</original>
    <variation>I</variation>
    <location>
        <position position="531"/>
    </location>
</feature>
<feature type="sequence variant" id="VAR_063966" description="In EVR4; autosomal recessive; dbSNP:rs80358310." evidence="22">
    <original>T</original>
    <variation>M</variation>
    <location>
        <position position="535"/>
    </location>
</feature>
<feature type="sequence variant" id="VAR_071013" description="In EVR4; the mutation results in significantly reduced Norrin signal transduction." evidence="39">
    <original>L</original>
    <variation>P</variation>
    <location>
        <position position="540"/>
    </location>
</feature>
<feature type="sequence variant" id="VAR_085734" description="In OPPG; uncertain significance." evidence="42">
    <original>L</original>
    <variation>P</variation>
    <location>
        <position position="541"/>
    </location>
</feature>
<feature type="sequence variant" id="VAR_063967" description="In EVR4; autosomal recessive; dbSNP:rs80358311." evidence="27">
    <original>G</original>
    <variation>R</variation>
    <location>
        <position position="550"/>
    </location>
</feature>
<feature type="sequence variant" id="VAR_080858" description="Found in a family affected by polycystic kidney and liver disease; uncertain significance; the patients carried additional PKD1 variants; the mutation results in significantly reduced WNT3A-induced signaling pathway; dbSNP:rs377144001." evidence="40">
    <original>W</original>
    <variation>C</variation>
    <location>
        <position position="560"/>
    </location>
</feature>
<feature type="sequence variant" id="VAR_021222" description="In EVR4; autosomal recessive; has significantly reduced Wnt or Norrin signal transduction; dbSNP:rs80358312." evidence="17 24">
    <original>R</original>
    <variation>Q</variation>
    <location>
        <position position="570"/>
    </location>
</feature>
<feature type="sequence variant" id="VAR_021815" description="In OPPG; dbSNP:rs121908665." evidence="7 24">
    <original>R</original>
    <variation>W</variation>
    <location>
        <position position="570"/>
    </location>
</feature>
<feature type="sequence variant" id="VAR_063968" description="In EVR4 and OPPG; uncertain significance; appears to traffic less well than does the wild-type protein; appears to be post-translationally modified similar to wild-type protein; has 60% of wild-type activity to transduce Wnt signal; has a significantly reduced ability to transduce Norrin signal; dbSNP:rs80358313." evidence="22 24 42">
    <original>G</original>
    <variation>R</variation>
    <location>
        <position position="610"/>
    </location>
</feature>
<feature type="sequence variant" id="VAR_063969" description="In EVR4; autosomal recessive; dbSNP:rs80358314." evidence="22">
    <original>F</original>
    <variation>C</variation>
    <location>
        <position position="617"/>
    </location>
</feature>
<feature type="sequence variant" id="VAR_076549" description="In EVR1; reduces Norrin signal transduction; dbSNP:rs989864153." evidence="41">
    <original>R</original>
    <variation>W</variation>
    <location>
        <position position="624"/>
    </location>
</feature>
<feature type="sequence variant" id="VAR_080935" description="In PCLD4; uncertain significance; the patient carried additional PKHD1 variant; dbSNP:rs758976409." evidence="43">
    <original>K</original>
    <variation>E</variation>
    <location>
        <position position="638"/>
    </location>
</feature>
<feature type="sequence variant" id="VAR_021816" description="In dbSNP:rs4988321." evidence="7 11 15">
    <original>V</original>
    <variation>M</variation>
    <location>
        <position position="667"/>
    </location>
</feature>
<feature type="sequence variant" id="VAR_063970" description="In OPPG; dbSNP:rs1470530779." evidence="24">
    <original>D</original>
    <variation>N</variation>
    <location>
        <position position="683"/>
    </location>
</feature>
<feature type="sequence variant" id="VAR_080936" description="In PCLD4; uncertain significance; the patient carried additional PKHD1 variant; dbSNP:rs1339222045." evidence="43">
    <original>V</original>
    <variation>A</variation>
    <location>
        <position position="684"/>
    </location>
</feature>
<feature type="sequence variant" id="VAR_063971" description="In OPPG; dbSNP:rs746701187." evidence="24">
    <original>Y</original>
    <variation>H</variation>
    <location>
        <position position="733"/>
    </location>
</feature>
<feature type="sequence variant" id="VAR_021223" description="In EVR4; autosomal recessive; dbSNP:rs121908674." evidence="17">
    <original>R</original>
    <variation>G</variation>
    <location>
        <position position="752"/>
    </location>
</feature>
<feature type="sequence variant" id="VAR_063972" description="In EVR4; dbSNP:rs80358316." evidence="22">
    <original>T</original>
    <variation>A</variation>
    <location>
        <position position="798"/>
    </location>
</feature>
<feature type="sequence variant" id="VAR_063973" description="In EVR4; dbSNP:rs765952535." evidence="34">
    <original>R</original>
    <variation>W</variation>
    <location>
        <position position="805"/>
    </location>
</feature>
<feature type="sequence variant" id="VAR_071014" description="Likely benign; no effect on Norrin signal transduction." evidence="39">
    <original>Q</original>
    <variation>P</variation>
    <location>
        <position position="816"/>
    </location>
</feature>
<feature type="sequence variant" id="VAR_071015" description="In EVR4; uncertain significance; the mutation results in significantly reduced Norrin signal transduction; dbSNP:rs1398692057." evidence="39">
    <original>T</original>
    <variation>M</variation>
    <location>
        <position position="852"/>
    </location>
</feature>
<feature type="sequence variant" id="VAR_080937" description="In PCLD4; uncertain significance; the patient carried additional PKHD1 variant; dbSNP:rs369471051." evidence="43">
    <original>R</original>
    <variation>C</variation>
    <location>
        <position position="925"/>
    </location>
</feature>
<feature type="sequence variant" id="VAR_063974" description="In OSTEOP; uncertain significance; found in a patient with polycystic kidney disease; uncertain significance; dbSNP:rs61889560." evidence="19 40">
    <original>R</original>
    <variation>Q</variation>
    <location>
        <position position="1036"/>
    </location>
</feature>
<feature type="sequence variant" id="VAR_063975" description="In OPPG." evidence="24">
    <original>D</original>
    <variation>Y</variation>
    <location>
        <position position="1099"/>
    </location>
</feature>
<feature type="sequence variant" id="VAR_063976" description="In OPPG; dbSNP:rs377258285." evidence="24">
    <original>R</original>
    <variation>C</variation>
    <location>
        <position position="1113"/>
    </location>
</feature>
<feature type="sequence variant" id="VAR_063977" description="In EVR4; uncertain significance; dbSNP:rs80358317." evidence="22">
    <original>N</original>
    <variation>D</variation>
    <location>
        <position position="1121"/>
    </location>
</feature>
<feature type="sequence variant" id="VAR_080859" description="In dbSNP:rs143396225." evidence="40">
    <original>R</original>
    <variation>C</variation>
    <location>
        <position position="1135"/>
    </location>
</feature>
<feature type="sequence variant" id="VAR_080860" description="Found in a patient affected by polycystic kidney disease; uncertain significance; the patient also carried a PKD1 variant; results in significantly reduced WNT3A-induced signaling pathway; dbSNP:rs724159825." evidence="40">
    <original>Q</original>
    <variation>H</variation>
    <location>
        <position position="1156"/>
    </location>
</feature>
<feature type="sequence variant" id="VAR_018466" description="In EVR4; an individual with total retinal detachment and retinoschisis; is unable to transduce Wnt or Norrin signal transduction; dbSNP:rs80358318." evidence="14 24">
    <original>Y</original>
    <variation>H</variation>
    <location>
        <position position="1168"/>
    </location>
</feature>
<feature type="sequence variant" id="VAR_080861" description="In PCLD4; the mutation results in significantly reduced WNT3A-induced signaling pathway; dbSNP:rs141178995." evidence="38">
    <original>R</original>
    <variation>W</variation>
    <location>
        <position position="1188"/>
    </location>
</feature>
<feature type="sequence variant" id="VAR_035208" description="In dbSNP:rs11607268.">
    <original>V</original>
    <variation>L</variation>
    <location>
        <position position="1204"/>
    </location>
</feature>
<feature type="sequence variant" id="VAR_063978" description="In EVR4; dbSNP:rs768615287." evidence="36">
    <original>C</original>
    <variation>F</variation>
    <location>
        <position position="1253"/>
    </location>
</feature>
<feature type="sequence variant" id="VAR_021817" description="In dbSNP:rs3736228." evidence="10 11 12 15">
    <original>A</original>
    <variation>V</variation>
    <location>
        <position position="1330"/>
    </location>
</feature>
<feature type="sequence variant" id="VAR_018467" description="In EVR4; autosomal dominant; has mildly reduced Wnt or Norrin signal transduction; dbSNP:rs80358320." evidence="14 24">
    <original>C</original>
    <variation>G</variation>
    <location>
        <position position="1361"/>
    </location>
</feature>
<feature type="sequence variant" id="VAR_021224" description="In EVR4; autosomal recessive; dbSNP:rs28939709." evidence="17 24">
    <original>E</original>
    <variation>K</variation>
    <location>
        <position position="1367"/>
    </location>
</feature>
<feature type="sequence variant" id="VAR_063979" description="In OPPG; uncertain significance; dbSNP:rs2098676312." evidence="24 42">
    <original>G</original>
    <variation>D</variation>
    <location>
        <position position="1401"/>
    </location>
</feature>
<feature type="sequence variant" id="VAR_076550" description="In EVR1; decreases protein abundance; dbSNP:rs201030241." evidence="41">
    <original>Y</original>
    <variation>C</variation>
    <location>
        <position position="1517"/>
    </location>
</feature>
<feature type="sequence variant" id="VAR_021225" description="In dbSNP:rs1127291." evidence="14 44">
    <original>A</original>
    <variation>V</variation>
    <location>
        <position position="1525"/>
    </location>
</feature>
<feature type="sequence variant" id="VAR_080862" description="In PCLD4; uncertain significance; dbSNP:rs724159826." evidence="38">
    <original>R</original>
    <variation>S</variation>
    <location>
        <position position="1529"/>
    </location>
</feature>
<feature type="sequence variant" id="VAR_063980" description="In OSTEOP; uncertain significance; does not result in a significant alteration of Wnt signal transduction; dbSNP:rs144376510." evidence="23">
    <original>A</original>
    <variation>T</variation>
    <location>
        <position position="1537"/>
    </location>
</feature>
<feature type="sequence variant" id="VAR_063981" description="In dbSNP:rs141407040." evidence="22">
    <original>T</original>
    <variation>M</variation>
    <location>
        <position position="1540"/>
    </location>
</feature>
<feature type="sequence variant" id="VAR_080938" description="In PCLD4; uncertain significance; the patient carried additional PKHD1 variant; dbSNP:rs150862227." evidence="43">
    <original>T</original>
    <variation>M</variation>
    <location>
        <position position="1541"/>
    </location>
</feature>
<feature type="sequence variant" id="VAR_080863" description="In PCLD4; uncertain significance; the mutation results in significantly reduced WNT3A-induced signaling pathway; dbSNP:rs724159827." evidence="38">
    <original>D</original>
    <variation>N</variation>
    <location>
        <position position="1551"/>
    </location>
</feature>
<feature type="sequence conflict" description="In Ref. 3; AAK52433." evidence="49" ref="3">
    <location>
        <begin position="1525"/>
        <end position="1528"/>
    </location>
</feature>
<organism>
    <name type="scientific">Homo sapiens</name>
    <name type="common">Human</name>
    <dbReference type="NCBI Taxonomy" id="9606"/>
    <lineage>
        <taxon>Eukaryota</taxon>
        <taxon>Metazoa</taxon>
        <taxon>Chordata</taxon>
        <taxon>Craniata</taxon>
        <taxon>Vertebrata</taxon>
        <taxon>Euteleostomi</taxon>
        <taxon>Mammalia</taxon>
        <taxon>Eutheria</taxon>
        <taxon>Euarchontoglires</taxon>
        <taxon>Primates</taxon>
        <taxon>Haplorrhini</taxon>
        <taxon>Catarrhini</taxon>
        <taxon>Hominidae</taxon>
        <taxon>Homo</taxon>
    </lineage>
</organism>
<accession>O75197</accession>
<accession>Q96TD6</accession>
<accession>Q9UES7</accession>
<accession>Q9UP66</accession>
<protein>
    <recommendedName>
        <fullName evidence="47">Low-density lipoprotein receptor-related protein 5</fullName>
        <shortName evidence="46">LRP-5</shortName>
    </recommendedName>
    <alternativeName>
        <fullName evidence="1">Low-density lipoprotein receptor-related protein 7</fullName>
        <shortName>LRP-7</shortName>
    </alternativeName>
</protein>
<reference key="1">
    <citation type="journal article" date="1998" name="Biochem. Biophys. Res. Commun.">
        <title>Molecular cloning and characterization of LR3, a novel LDL receptor family protein with mitogenic activity.</title>
        <authorList>
            <person name="Dong Y."/>
            <person name="Lathrop W."/>
            <person name="Weaver D."/>
            <person name="Qiu Q."/>
            <person name="Cini J."/>
            <person name="Bertolini D."/>
            <person name="Chen D."/>
        </authorList>
    </citation>
    <scope>NUCLEOTIDE SEQUENCE [MRNA]</scope>
    <scope>TISSUE SPECIFICITY</scope>
    <source>
        <tissue>Osteoblast</tissue>
    </source>
</reference>
<reference key="2">
    <citation type="journal article" date="1998" name="Gene">
        <title>Cloning of a novel member of the low-density lipoprotein receptor family.</title>
        <authorList>
            <person name="Hey P.J."/>
            <person name="Twells R.C.J."/>
            <person name="Phillips M.S."/>
            <person name="Nakagawa Y."/>
            <person name="Brown S.D."/>
            <person name="Kawaguchi Y."/>
            <person name="Cox R."/>
            <person name="Xie G."/>
            <person name="Dugan V."/>
            <person name="Hammond H."/>
            <person name="Metzker M.L."/>
            <person name="Todd J.A."/>
            <person name="Hess J.F."/>
        </authorList>
    </citation>
    <scope>NUCLEOTIDE SEQUENCE [MRNA]</scope>
    <scope>VARIANT VAL-1525</scope>
    <source>
        <tissue>Osteoblast</tissue>
    </source>
</reference>
<reference key="3">
    <citation type="journal article" date="2001" name="Genomics">
        <title>The sequence and gene characterization of a 400-kb candidate region for IDDM4 on chromosome 11q13.</title>
        <authorList>
            <person name="Twells R.C.J."/>
            <person name="Metzker M.L."/>
            <person name="Brown S.D."/>
            <person name="Cox R."/>
            <person name="Garey C."/>
            <person name="Hammond H."/>
            <person name="Hey P.J."/>
            <person name="Levy E."/>
            <person name="Nakagawa Y."/>
            <person name="Philips M.S."/>
            <person name="Todd J.A."/>
            <person name="Hess J.F."/>
        </authorList>
    </citation>
    <scope>NUCLEOTIDE SEQUENCE [GENOMIC DNA]</scope>
</reference>
<reference key="4">
    <citation type="journal article" date="2003" name="Proc. Natl. Acad. Sci. U.S.A.">
        <title>Low-density lipoprotein receptor-related protein 5 (LRP5) is essential for normal cholesterol metabolism and glucose-induced insulin secretion.</title>
        <authorList>
            <person name="Fujino T."/>
            <person name="Asaba H."/>
            <person name="Kang M.J."/>
            <person name="Ikeda Y."/>
            <person name="Sone H."/>
            <person name="Takada S."/>
            <person name="Kim D.H."/>
            <person name="Ioka R.X."/>
            <person name="Ono M."/>
            <person name="Tomoyori H."/>
            <person name="Okubo M."/>
            <person name="Murase T."/>
            <person name="Kamataki A."/>
            <person name="Yamamoto J."/>
            <person name="Magoori K."/>
            <person name="Takahashi S."/>
            <person name="Miyamoto Y."/>
            <person name="Oishi H."/>
            <person name="Nose M."/>
            <person name="Okazaki M."/>
            <person name="Usui S."/>
            <person name="Imaizumi K."/>
            <person name="Yanagisawa M."/>
            <person name="Sakai J."/>
            <person name="Yamamoto T.T."/>
        </authorList>
    </citation>
    <scope>NUCLEOTIDE SEQUENCE [MRNA]</scope>
    <scope>VARIANT VAL-1330</scope>
</reference>
<reference key="5">
    <citation type="journal article" date="2006" name="Nature">
        <title>Human chromosome 11 DNA sequence and analysis including novel gene identification.</title>
        <authorList>
            <person name="Taylor T.D."/>
            <person name="Noguchi H."/>
            <person name="Totoki Y."/>
            <person name="Toyoda A."/>
            <person name="Kuroki Y."/>
            <person name="Dewar K."/>
            <person name="Lloyd C."/>
            <person name="Itoh T."/>
            <person name="Takeda T."/>
            <person name="Kim D.-W."/>
            <person name="She X."/>
            <person name="Barlow K.F."/>
            <person name="Bloom T."/>
            <person name="Bruford E."/>
            <person name="Chang J.L."/>
            <person name="Cuomo C.A."/>
            <person name="Eichler E."/>
            <person name="FitzGerald M.G."/>
            <person name="Jaffe D.B."/>
            <person name="LaButti K."/>
            <person name="Nicol R."/>
            <person name="Park H.-S."/>
            <person name="Seaman C."/>
            <person name="Sougnez C."/>
            <person name="Yang X."/>
            <person name="Zimmer A.R."/>
            <person name="Zody M.C."/>
            <person name="Birren B.W."/>
            <person name="Nusbaum C."/>
            <person name="Fujiyama A."/>
            <person name="Hattori M."/>
            <person name="Rogers J."/>
            <person name="Lander E.S."/>
            <person name="Sakaki Y."/>
        </authorList>
    </citation>
    <scope>NUCLEOTIDE SEQUENCE [LARGE SCALE GENOMIC DNA]</scope>
</reference>
<reference key="6">
    <citation type="submission" date="2005-07" db="EMBL/GenBank/DDBJ databases">
        <authorList>
            <person name="Mural R.J."/>
            <person name="Istrail S."/>
            <person name="Sutton G."/>
            <person name="Florea L."/>
            <person name="Halpern A.L."/>
            <person name="Mobarry C.M."/>
            <person name="Lippert R."/>
            <person name="Walenz B."/>
            <person name="Shatkay H."/>
            <person name="Dew I."/>
            <person name="Miller J.R."/>
            <person name="Flanigan M.J."/>
            <person name="Edwards N.J."/>
            <person name="Bolanos R."/>
            <person name="Fasulo D."/>
            <person name="Halldorsson B.V."/>
            <person name="Hannenhalli S."/>
            <person name="Turner R."/>
            <person name="Yooseph S."/>
            <person name="Lu F."/>
            <person name="Nusskern D.R."/>
            <person name="Shue B.C."/>
            <person name="Zheng X.H."/>
            <person name="Zhong F."/>
            <person name="Delcher A.L."/>
            <person name="Huson D.H."/>
            <person name="Kravitz S.A."/>
            <person name="Mouchard L."/>
            <person name="Reinert K."/>
            <person name="Remington K.A."/>
            <person name="Clark A.G."/>
            <person name="Waterman M.S."/>
            <person name="Eichler E.E."/>
            <person name="Adams M.D."/>
            <person name="Hunkapiller M.W."/>
            <person name="Myers E.W."/>
            <person name="Venter J.C."/>
        </authorList>
    </citation>
    <scope>NUCLEOTIDE SEQUENCE [LARGE SCALE GENOMIC DNA]</scope>
</reference>
<reference key="7">
    <citation type="journal article" date="2004" name="Genome Res.">
        <title>The status, quality, and expansion of the NIH full-length cDNA project: the Mammalian Gene Collection (MGC).</title>
        <authorList>
            <consortium name="The MGC Project Team"/>
        </authorList>
    </citation>
    <scope>NUCLEOTIDE SEQUENCE [LARGE SCALE MRNA]</scope>
</reference>
<reference key="8">
    <citation type="journal article" date="2007" name="Biochemistry">
        <title>Requirement for natively unstructured regions of mesoderm development candidate 2 in promoting low-density lipoprotein receptor-related protein 6 maturation.</title>
        <authorList>
            <person name="Koduri V."/>
            <person name="Blacklow S.C."/>
        </authorList>
    </citation>
    <scope>INTERACTION WITH MESD</scope>
</reference>
<reference key="9">
    <citation type="journal article" date="2001" name="Curr. Biol.">
        <title>Head inducer Dickkopf-1 is a ligand for Wnt coreceptor LRP6.</title>
        <authorList>
            <person name="Semenov M.V."/>
            <person name="Tamai K."/>
            <person name="Brott B.K."/>
            <person name="Kuhl M."/>
            <person name="Sokol S."/>
            <person name="He X."/>
        </authorList>
    </citation>
    <scope>INTERACTION WITH FZD8 IN WNT-FZD8-LRP5 COMPLEX</scope>
    <scope>INTERACTION WITH DKK1</scope>
    <scope>FUNCTION</scope>
</reference>
<reference key="10">
    <citation type="journal article" date="2005" name="J. Biol. Chem.">
        <title>Sclerostin binds to LRP5/6 and antagonizes canonical Wnt signaling.</title>
        <authorList>
            <person name="Li X."/>
            <person name="Zhang Y."/>
            <person name="Kang H."/>
            <person name="Liu W."/>
            <person name="Liu P."/>
            <person name="Zhang J."/>
            <person name="Harris S.E."/>
            <person name="Wu D."/>
        </authorList>
    </citation>
    <scope>INTERACTION WITH DKK1 AND SOST</scope>
    <scope>FUNCTION</scope>
</reference>
<reference key="11">
    <citation type="journal article" date="2005" name="J. Biol. Chem.">
        <title>SOST is a ligand for LRP5/LRP6 and a Wnt signaling inhibitor.</title>
        <authorList>
            <person name="Semenov M."/>
            <person name="Tamai K."/>
            <person name="He X."/>
        </authorList>
    </citation>
    <scope>INTERACTION WITH WNT1 IN THE WNT-FZD-LRP5 COMPLEX</scope>
    <scope>INTERACTION WITH SOST</scope>
    <scope>FUNCTION</scope>
</reference>
<reference key="12">
    <citation type="journal article" date="2006" name="J. Biol. Chem.">
        <title>Negative regulation of LRP6 function by casein kinase I epsilon phosphorylation.</title>
        <authorList>
            <person name="Swiatek W."/>
            <person name="Kang H."/>
            <person name="Garcia B.A."/>
            <person name="Shabanowitz J."/>
            <person name="Coombs G.S."/>
            <person name="Hunt D.F."/>
            <person name="Virshup D.M."/>
        </authorList>
    </citation>
    <scope>INTERACTION WITH CSNK1E</scope>
</reference>
<reference key="13">
    <citation type="journal article" date="2009" name="J. Cell. Biochem.">
        <title>A cell-based Dkk1 binding assay reveals roles for extracellular domains of LRP5 in Dkk1 interaction and highlights differences between wild-type and the high bone mass mutant LRP5(G171V).</title>
        <authorList>
            <person name="Murrills R.J."/>
            <person name="Matteo J.J."/>
            <person name="Bhat B.M."/>
            <person name="Coleburn V.E."/>
            <person name="Allen K.M."/>
            <person name="Chen W."/>
            <person name="Damagnez V."/>
            <person name="Bhat R.A."/>
            <person name="Bex F.J."/>
            <person name="Bodine P.V."/>
        </authorList>
    </citation>
    <scope>INTERACTION WITH DKK1 AND MESD</scope>
    <scope>CHARACTERIZATION OF VARIANT VAL-171</scope>
</reference>
<reference key="14">
    <citation type="journal article" date="2008" name="J. Cell Biol.">
        <title>Caprin-2 enhances canonical Wnt signaling through regulating LRP5/6 phosphorylation.</title>
        <authorList>
            <person name="Ding Y."/>
            <person name="Xi Y."/>
            <person name="Chen T."/>
            <person name="Wang J.Y."/>
            <person name="Tao D.L."/>
            <person name="Wu Z.L."/>
            <person name="Li Y.P."/>
            <person name="Li C."/>
            <person name="Zeng R."/>
            <person name="Li L."/>
        </authorList>
    </citation>
    <scope>INTERACTION WITH CAPRIN2</scope>
</reference>
<reference key="15">
    <citation type="journal article" date="2013" name="J. Proteome Res.">
        <title>Toward a comprehensive characterization of a human cancer cell phosphoproteome.</title>
        <authorList>
            <person name="Zhou H."/>
            <person name="Di Palma S."/>
            <person name="Preisinger C."/>
            <person name="Peng M."/>
            <person name="Polat A.N."/>
            <person name="Heck A.J."/>
            <person name="Mohammed S."/>
        </authorList>
    </citation>
    <scope>IDENTIFICATION BY MASS SPECTROMETRY [LARGE SCALE ANALYSIS]</scope>
    <source>
        <tissue>Erythroleukemia</tissue>
    </source>
</reference>
<reference key="16">
    <citation type="journal article" date="2001" name="Mol. Cell">
        <title>Low-density lipoprotein receptor-related protein-5 binds to Axin and regulates the canonical Wnt signaling pathway.</title>
        <authorList>
            <person name="Mao J."/>
            <person name="Wang J."/>
            <person name="Liu B."/>
            <person name="Pan W."/>
            <person name="Farr G.H. III"/>
            <person name="Flynn C."/>
            <person name="Yuan H."/>
            <person name="Takada S."/>
            <person name="Kimelman D."/>
            <person name="Li L."/>
            <person name="Wu D."/>
        </authorList>
    </citation>
    <scope>FUNCTION</scope>
    <scope>INTERACTION WITH AXIN1</scope>
</reference>
<reference key="17">
    <citation type="journal article" date="2004" name="Mol. Cell">
        <title>A mechanism for Wnt coreceptor activation.</title>
        <authorList>
            <person name="Tamai K."/>
            <person name="Zeng X."/>
            <person name="Liu C."/>
            <person name="Zhang X."/>
            <person name="Harada Y."/>
            <person name="Chang Z."/>
            <person name="He X."/>
        </authorList>
    </citation>
    <scope>FUNCTION</scope>
    <scope>PHOSPHORYLATION</scope>
    <scope>INTERACTION WITH AXIN1</scope>
</reference>
<reference key="18">
    <citation type="journal article" date="2004" name="Mol. Cell. Biol.">
        <title>The LRP5 high-bone-mass G171V mutation disrupts LRP5 interaction with Mesd.</title>
        <authorList>
            <person name="Zhang Y."/>
            <person name="Wang Y."/>
            <person name="Li X."/>
            <person name="Zhang J."/>
            <person name="Mao J."/>
            <person name="Li Z."/>
            <person name="Zheng J."/>
            <person name="Li L."/>
            <person name="Harris S."/>
            <person name="Wu D."/>
        </authorList>
    </citation>
    <scope>INTERACTION WITH MESD</scope>
    <scope>CHARACTERIZATION OF VARIANT HBM VAL-171</scope>
</reference>
<reference key="19">
    <citation type="journal article" date="2010" name="Nature">
        <title>APCDD1 is a novel Wnt inhibitor mutated in hereditary hypotrichosis simplex.</title>
        <authorList>
            <person name="Shimomura Y."/>
            <person name="Agalliu D."/>
            <person name="Vonica A."/>
            <person name="Luria V."/>
            <person name="Wajid M."/>
            <person name="Baumer A."/>
            <person name="Belli S."/>
            <person name="Petukhova L."/>
            <person name="Schinzel A."/>
            <person name="Brivanlou A.H."/>
            <person name="Barres B.A."/>
            <person name="Christiano A.M."/>
        </authorList>
    </citation>
    <scope>INTERACTION WITH APCDD1</scope>
</reference>
<reference key="20">
    <citation type="journal article" date="2002" name="Am. J. Hum. Genet.">
        <title>A mutation in the LDL receptor-related protein 5 gene results in the autosomal dominant high-bone-mass trait.</title>
        <authorList>
            <person name="Little R.D."/>
            <person name="Carulli J.P."/>
            <person name="Del Mastro R.G."/>
            <person name="Dupuis J."/>
            <person name="Osborne M."/>
            <person name="Folz C."/>
            <person name="Manning S.P."/>
            <person name="Swain P.M."/>
            <person name="Zhao S.-C."/>
            <person name="Eustace B."/>
            <person name="Lappe M.M."/>
            <person name="Spitzer L."/>
            <person name="Zweier S."/>
            <person name="Braunschweiger K."/>
            <person name="Benchekroun Y."/>
            <person name="Hu X."/>
            <person name="Adair R."/>
            <person name="Chee L."/>
            <person name="FitzGerald M.G."/>
            <person name="Tulig C."/>
            <person name="Caruso A."/>
            <person name="Tzellas N."/>
            <person name="Bawa A."/>
            <person name="Franklin B."/>
            <person name="McGuire S."/>
            <person name="Nogues X."/>
            <person name="Gong G."/>
            <person name="Allen K.M."/>
            <person name="Anisowicz A."/>
            <person name="Morales A.J."/>
            <person name="Lomedico P.T."/>
            <person name="Recker S.M."/>
            <person name="Van Eerdewegh P."/>
            <person name="Recker R.R."/>
            <person name="Johnson M.L."/>
        </authorList>
    </citation>
    <scope>VARIANT HBM VAL-171</scope>
    <scope>POLYMORPHISM</scope>
</reference>
<reference key="21">
    <citation type="journal article" date="2003" name="Am. J. Hum. Genet.">
        <title>Six novel missense mutations in the LDL receptor-related protein 5 (LRP5) gene in different conditions with an increased bone density.</title>
        <authorList>
            <person name="Van Wesenbeeck L."/>
            <person name="Cleiren E."/>
            <person name="Gram J."/>
            <person name="Beals R.K."/>
            <person name="Benichou O."/>
            <person name="Scopelliti D."/>
            <person name="Key L."/>
            <person name="Renton T."/>
            <person name="Bartels C."/>
            <person name="Gong Y."/>
            <person name="Warman M.L."/>
            <person name="de Vernejoul M.-C."/>
            <person name="Bollerslev J."/>
            <person name="Van Hul W."/>
        </authorList>
    </citation>
    <scope>VARIANTS OPTA1 TYR-111; ARG-171; THR-242 AND ILE-253</scope>
    <scope>VARIANTS WENHY THR-214; VAL-214 AND THR-242</scope>
    <scope>VARIANT VBCH2 THR-242</scope>
    <scope>VARIANTS 18-LEU--LEU-20 DEL; LEU-20 INS; ARG-89; MET-667 AND VAL-1330</scope>
</reference>
<reference key="22">
    <citation type="journal article" date="2004" name="Am. J. Hum. Genet.">
        <title>Mutations in LRP5 or FZD4 underlie the common familial exudative vitreoretinopathy locus on chromosome 11q.</title>
        <authorList>
            <person name="Toomes C."/>
            <person name="Bottomley H.M."/>
            <person name="Jackson R.M."/>
            <person name="Towns K.V."/>
            <person name="Scott S."/>
            <person name="Mackey D.A."/>
            <person name="Craig J.E."/>
            <person name="Jiang L."/>
            <person name="Yang Z."/>
            <person name="Trembath R."/>
            <person name="Woodruff G."/>
            <person name="Gregory-Evans C.Y."/>
            <person name="Gregory-Evans K."/>
            <person name="Parker M.J."/>
            <person name="Black G.C.M."/>
            <person name="Downey L.M."/>
            <person name="Zhang K."/>
            <person name="Inglehearn C.F."/>
        </authorList>
    </citation>
    <scope>VARIANTS EVR4 MET-173; HIS-1168 AND GLY-1361</scope>
    <scope>VARIANT VAL-1525</scope>
</reference>
<reference key="23">
    <citation type="journal article" date="2004" name="Am. J. Hum. Genet.">
        <title>Polymorphisms in the low-density lipoprotein receptor-related protein 5 (LRP5) gene are associated with variation in vertebral bone mass, vertebral bone size, and stature in whites.</title>
        <authorList>
            <person name="Ferrari S.L."/>
            <person name="Deutsch S."/>
            <person name="Choudhury U."/>
            <person name="Chevalley T."/>
            <person name="Bonjour J.-P."/>
            <person name="Dermitzakis E.T."/>
            <person name="Rizzoli R."/>
            <person name="Antonarakis S.E."/>
        </authorList>
    </citation>
    <scope>VARIANTS MET-667 AND VAL-1330</scope>
</reference>
<reference key="24">
    <citation type="journal article" date="2004" name="Am. J. Hum. Genet.">
        <title>Autosomal recessive familial exudative vitreoretinopathy is associated with mutations in LRP5.</title>
        <authorList>
            <person name="Jiao X."/>
            <person name="Ventruto V."/>
            <person name="Trese M.T."/>
            <person name="Shastry B.S."/>
            <person name="Hejtmancik J.F."/>
        </authorList>
    </citation>
    <scope>VARIANTS EVR4 GLN-570; GLY-752 AND LYS-1367</scope>
</reference>
<reference key="25">
    <citation type="journal article" date="2005" name="Am. J. Hum. Genet.">
        <title>Clinical and molecular findings in osteoporosis-pseudoglioma syndrome.</title>
        <authorList>
            <consortium name="Osteoporosis-Pseudoglioma collaborative group"/>
            <person name="Ai M."/>
            <person name="Heeger S."/>
            <person name="Bartels C.F."/>
            <person name="Schelling D.K."/>
        </authorList>
    </citation>
    <scope>VARIANTS OPPG ASN-203; MET-244; PHE-307; TRP-348; GLN-353; LEU-356; LYS-390; GLU-400; ARG-404; ASN-434; LYS-460; GLN-494; VAL-520; TRP-570; ARG-610; ASN-683; HIS-733; TYR-1099; CYS-1113 AND ASP-1401</scope>
    <scope>CHARACTERIZATION OF VARIANTS OPPG MET-244; LEU-356; LYS-390; ARG-404; ASN-434; VAL-520 AND ARG-610</scope>
    <scope>CHARACTERIZATION OF VARIANTS EVR4 MET-173; GLN-570; HIS-1168; GLY-1361 AND LYS-1367</scope>
    <scope>FUNCTION</scope>
</reference>
<reference key="26">
    <citation type="journal article" date="2006" name="Bone">
        <title>A family with osteoporosis pseudoglioma syndrome due to compound heterozygosity of two novel mutations in the LRP5 gene.</title>
        <authorList>
            <person name="Cheung W.M.W."/>
            <person name="Jin L.Y."/>
            <person name="Smith D.K."/>
            <person name="Cheung P.T."/>
            <person name="Kwan E.Y.W."/>
            <person name="Low L."/>
            <person name="Kung A.W.C."/>
        </authorList>
    </citation>
    <scope>VARIANTS OPPG ARG-478 AND CYS-504</scope>
</reference>
<reference key="27">
    <citation type="journal article" date="2008" name="Bone">
        <title>Osteoporosis-pseudoglioma syndrome: description of 9 new cases and beneficial response to bisphosphonates.</title>
        <authorList>
            <person name="Streeten E.A."/>
            <person name="McBride D."/>
            <person name="Puffenberger E."/>
            <person name="Hoffman M.E."/>
            <person name="Pollin T.I."/>
            <person name="Donnelly P."/>
            <person name="Sack P."/>
            <person name="Morton H."/>
        </authorList>
    </citation>
    <scope>VARIANT OPPG ALA-409</scope>
</reference>
<reference key="28">
    <citation type="journal article" date="2006" name="Br. J. Ophthalmol.">
        <title>Reduced bone mineral density and hyaloid vasculature remnants in a consanguineous recessive FEVR family with a mutation in LRP5.</title>
        <authorList>
            <person name="Downey L.M."/>
            <person name="Bottomley H.M."/>
            <person name="Sheridan E."/>
            <person name="Ahmed M."/>
            <person name="Gilmour D.F."/>
            <person name="Inglehearn C.F."/>
            <person name="Reddy A."/>
            <person name="Agrawal A."/>
            <person name="Bradbury J."/>
            <person name="Toomes C."/>
        </authorList>
    </citation>
    <scope>VARIANT EVR4 ARG-550</scope>
</reference>
<reference key="29">
    <citation type="journal article" date="2001" name="Cell">
        <title>LDL receptor-related protein 5 (LRP5) affects bone accrual and eye development.</title>
        <authorList>
            <person name="Gong Y."/>
            <person name="Slee R.B."/>
            <person name="Fukai N."/>
            <person name="Rawadi G."/>
            <person name="Roman-Roman S."/>
            <person name="Reginato A.M."/>
            <person name="Wang H."/>
            <person name="Cundy T."/>
            <person name="Glorieux F.H."/>
            <person name="Lev D."/>
            <person name="Zacharin M."/>
            <person name="Oexle K."/>
            <person name="Marcelino J."/>
            <person name="Suwairi W."/>
            <person name="Heeger S."/>
            <person name="Sabatakos G."/>
            <person name="Apte S."/>
            <person name="Adkins W.N."/>
            <person name="Allgrove J."/>
            <person name="Arslan-Kirchner M."/>
            <person name="Batch J.A."/>
            <person name="Beighton P."/>
            <person name="Black G.C."/>
            <person name="Boles R.G."/>
            <person name="Boon L.M."/>
            <person name="Borrone C."/>
            <person name="Brunner H.G."/>
            <person name="Carle G.F."/>
            <person name="Dallapiccola B."/>
            <person name="De Paepe A."/>
            <person name="Floege B."/>
            <person name="Halfhide M.L."/>
            <person name="Hall B."/>
            <person name="Hennekam R.C.M."/>
            <person name="Hirose T."/>
            <person name="Jans A."/>
            <person name="Jueppner H."/>
            <person name="Kim C.A."/>
            <person name="Keppler-Noreuil K."/>
            <person name="Kohlschuetter A."/>
            <person name="LaCombe D."/>
            <person name="Lambert M."/>
            <person name="Lemyre E."/>
            <person name="Letteboer T."/>
            <person name="Peltonen L."/>
            <person name="Ramesar R.S."/>
            <person name="Romanengo M."/>
            <person name="Somer H."/>
            <person name="Steichen-Gersdorf E."/>
            <person name="Steinmann B."/>
            <person name="Sullivan B."/>
            <person name="Superti-Furga A."/>
            <person name="Swoboda W."/>
            <person name="van den Boogaard M.-J."/>
            <person name="Van Hul W."/>
            <person name="Vikkula M."/>
            <person name="Votruba M."/>
            <person name="Zabel B."/>
            <person name="Garcia T."/>
            <person name="Baron R."/>
            <person name="Olsen B.R."/>
            <person name="Warman M.L."/>
        </authorList>
    </citation>
    <scope>VARIANTS OPPG GLN-494 AND TRP-570</scope>
    <scope>VARIANT MET-667</scope>
    <scope>FUNCTION</scope>
</reference>
<reference key="30">
    <citation type="journal article" date="2016" name="Eur. J. Hum. Genet.">
        <title>LRP5 variants may contribute to ADPKD.</title>
        <authorList>
            <person name="Cnossen W.R."/>
            <person name="te Morsche R.H."/>
            <person name="Hoischen A."/>
            <person name="Gilissen C."/>
            <person name="Venselaar H."/>
            <person name="Mehdi S."/>
            <person name="Bergmann C."/>
            <person name="Losekoot M."/>
            <person name="Breuning M.H."/>
            <person name="Peters D.J."/>
            <person name="Veltman J.A."/>
            <person name="Drenth J.P."/>
        </authorList>
    </citation>
    <scope>VARIANTS CYS-560; GLN-1036; CYS-1135 AND HIS-1156</scope>
    <scope>CHARACTERIZATION OF VARIANTS CYS-560; GLN-1036; CYS-1135 AND HIS-1156</scope>
    <scope>FUNCTION</scope>
    <scope>SUBCELLULAR LOCATION</scope>
</reference>
<reference key="31">
    <citation type="journal article" date="2016" name="Genet. Test. Mol. Biomarkers">
        <title>Whole Exome Sequencing Analysis Identifies Mutations in LRP5 in Indian Families with Familial Exudative Vitreoretinopathy.</title>
        <authorList>
            <person name="Zhang L."/>
            <person name="Yang Y."/>
            <person name="Li S."/>
            <person name="Tai Z."/>
            <person name="Huang L."/>
            <person name="Liu Y."/>
            <person name="Zhu X."/>
            <person name="Di Y."/>
            <person name="Qu C."/>
            <person name="Jiang Z."/>
            <person name="Li Y."/>
            <person name="Zhang G."/>
            <person name="Kim R."/>
            <person name="Sundaresan P."/>
            <person name="Yang Z."/>
            <person name="Zhu X."/>
        </authorList>
    </citation>
    <scope>VARIANTS EVR1 TRP-348; ASN-381; TRP-624 AND CYS-1517</scope>
    <scope>CHARACTERIZATION OF VARIANTS EVR1 TRP-348; ASN-381; TRP-624 AND CYS-1517</scope>
    <scope>FUNCTION</scope>
</reference>
<reference key="32">
    <citation type="journal article" date="2005" name="Hum. Mutat.">
        <title>Complexity of the genotype-phenotype correlation in familial exudative vitreoretinopathy with mutations in the LRP5 and/or FZD4 genes.</title>
        <authorList>
            <person name="Qin M."/>
            <person name="Hayashi H."/>
            <person name="Oshima K."/>
            <person name="Tahira T."/>
            <person name="Hayashi K."/>
            <person name="Kondo H."/>
        </authorList>
    </citation>
    <scope>VARIANTS EVR4 PHE-145; CYS-444; THR-522; MET-535; ARG-610; CYS-617; ALA-798 AND ASP-1121</scope>
    <scope>VARIANTS VAL-97 AND MET-1540</scope>
</reference>
<reference key="33">
    <citation type="journal article" date="2009" name="Hum. Mutat.">
        <title>A mutation in the signal sequence of LRP5 in a family with an osteoporosis-pseudoglioma syndrome (OPPG)-like phenotype indicates a novel disease mechanism for trinucleotide repeats.</title>
        <authorList>
            <person name="Chung B.D."/>
            <person name="Kayserili H."/>
            <person name="Ai M."/>
            <person name="Freudenberg J."/>
            <person name="Uzumcu A."/>
            <person name="Uyguner O."/>
            <person name="Bartels C.F."/>
            <person name="Honing S."/>
            <person name="Ramirez A."/>
            <person name="Hanisch F.G."/>
            <person name="Nurnberg G."/>
            <person name="Nurnberg P."/>
            <person name="Warman M.L."/>
            <person name="Wollnik B."/>
            <person name="Kubisch C."/>
            <person name="Netzer C."/>
        </authorList>
    </citation>
    <scope>VARIANT 15-LEU--LEU-20 DEL</scope>
</reference>
<reference key="34">
    <citation type="journal article" date="2010" name="Hum. Mutat.">
        <title>Overview of the mutation spectrum in familial exudative vitreoretinopathy and Norrie disease with identification of 21 novel variants in FZD4, LRP5, and NDP.</title>
        <authorList>
            <person name="Nikopoulos K."/>
            <person name="Venselaar H."/>
            <person name="Collin R.W.J."/>
            <person name="Riveiro-Alvarez R."/>
            <person name="Boonstra F.N."/>
            <person name="Hooymans J.M."/>
            <person name="Mukhopadhyay A."/>
            <person name="Shears D."/>
            <person name="van Bers M."/>
            <person name="de Wijs I.J."/>
            <person name="van Essen A.J."/>
            <person name="Sijmons R.H."/>
            <person name="Tilanus M.A.D."/>
            <person name="van Nouhuys C.E."/>
            <person name="Ayuso C."/>
            <person name="Hoefsloot L.H."/>
            <person name="Cremers F.P.M."/>
        </authorList>
    </citation>
    <scope>VARIANTS EVR4 LYS-441 AND PHE-1253</scope>
</reference>
<reference key="35">
    <citation type="journal article" date="2009" name="Invest. Ophthalmol. Vis. Sci.">
        <title>Clinical and molecular evaluation of probands and family members with familial exudative vitreoretinopathy.</title>
        <authorList>
            <person name="Boonstra F.N."/>
            <person name="van Nouhuys C.E."/>
            <person name="Schuil J."/>
            <person name="de Wijs I.J."/>
            <person name="van der Donk K.P."/>
            <person name="Nikopoulos K."/>
            <person name="Mukhopadhyay A."/>
            <person name="Scheffer H."/>
            <person name="Tilanus M.A.D."/>
            <person name="Cremers F.P.M."/>
            <person name="Hoefsloot L.H."/>
        </authorList>
    </citation>
    <scope>VARIANTS EVR4 ALA-511 AND TRP-805</scope>
</reference>
<reference key="36">
    <citation type="journal article" date="2005" name="J. Bone Miner. Res.">
        <title>Heterozygous mutations in the LDL receptor-related protein 5 (LRP5) gene are associated with primary osteoporosis in children.</title>
        <authorList>
            <person name="Hartikka H."/>
            <person name="Makitie O."/>
            <person name="Mannikko M."/>
            <person name="Doria A.S."/>
            <person name="Daneman A."/>
            <person name="Cole W.G."/>
            <person name="Ala-Kokko L."/>
            <person name="Sochett E.B."/>
        </authorList>
    </citation>
    <scope>VARIANTS OSTEOP THR-29 AND GLN-1036</scope>
</reference>
<reference key="37">
    <citation type="journal article" date="2005" name="J. Bone Miner. Res.">
        <title>Oropharyngeal skeletal disease accompanying high bone mass and novel LRP5 mutation.</title>
        <authorList>
            <person name="Rickels M.R."/>
            <person name="Zhang X."/>
            <person name="Mumm S."/>
            <person name="Whyte M.P."/>
        </authorList>
    </citation>
    <scope>VARIANT HBM MET-154</scope>
</reference>
<reference key="38">
    <citation type="journal article" date="2005" name="J. Bone Miner. Res.">
        <title>Missense mutations in LRP5 are not a common cause of idiopathic osteoporosis in adult men.</title>
        <authorList>
            <person name="Crabbe P."/>
            <person name="Balemans W."/>
            <person name="Willaert A."/>
            <person name="van Pottelbergh I."/>
            <person name="Cleiren E."/>
            <person name="Coucke P.J."/>
            <person name="Ai M."/>
            <person name="Goemaere S."/>
            <person name="van Hul W."/>
            <person name="de Paepe A."/>
            <person name="Kaufman J.-M."/>
        </authorList>
    </citation>
    <scope>VARIANTS OSTEOP LEU-356; LEU-455 AND THR-1537</scope>
    <scope>CHARACTERIZATION OF VARIANTS OSTEOP LEU-356; LEU-455 AND THR-1537</scope>
</reference>
<reference key="39">
    <citation type="journal article" date="2007" name="J. Bone Miner. Res.">
        <title>Novel LRP5 missense mutation in a patient with a high bone mass phenotype results in decreased DKK1-mediated inhibition of Wnt signaling.</title>
        <authorList>
            <person name="Balemans W."/>
            <person name="Devogelaer J.P."/>
            <person name="Cleiren E."/>
            <person name="Piters E."/>
            <person name="Caussin E."/>
            <person name="Van Hul W."/>
        </authorList>
    </citation>
    <scope>VARIANT HBM VAL-282</scope>
    <scope>CHARACTERIZATION OF VARIANT HBM VAL-282</scope>
</reference>
<reference key="40">
    <citation type="journal article" date="2004" name="J. Hum. Genet.">
        <title>LRP5, low-density-lipoprotein-receptor-related protein 5, is a determinant for bone mineral density.</title>
        <authorList>
            <person name="Mizuguchi T."/>
            <person name="Furuta I."/>
            <person name="Watanabe Y."/>
            <person name="Tsukamoto K."/>
            <person name="Tomita H."/>
            <person name="Tsujihata M."/>
            <person name="Ohta T."/>
            <person name="Kishino T."/>
            <person name="Matsumoto N."/>
            <person name="Minakami H."/>
            <person name="Niikawa N."/>
            <person name="Yoshiura K."/>
        </authorList>
    </citation>
    <scope>VARIANTS ARG-89 AND VAL-1330</scope>
    <scope>INVOLVEMENT IN OSTEOP</scope>
</reference>
<reference key="41">
    <citation type="journal article" date="2014" name="Mol. Vis.">
        <title>Identification of two novel LRP5 mutations in families with familial exudative vitreoretinopathy.</title>
        <authorList>
            <person name="Fei P."/>
            <person name="Zhang Q."/>
            <person name="Huang L."/>
            <person name="Xu Y."/>
            <person name="Zhu X."/>
            <person name="Tai Z."/>
            <person name="Gong B."/>
            <person name="Ma S."/>
            <person name="Yao Q."/>
            <person name="Li J."/>
            <person name="Zhao P."/>
            <person name="Yang Z."/>
        </authorList>
    </citation>
    <scope>VARIANT PRO-816</scope>
    <scope>VARIANTS EVR4 THR-422; PRO-540 AND MET-852</scope>
    <scope>CHARACTERIZATION OF VARIANTS EVR4 THR-422; PRO-540 AND MET-852</scope>
    <scope>CHARACTERIZATION OF VARIANT PRO-816</scope>
</reference>
<reference key="42">
    <citation type="journal article" date="2002" name="N. Engl. J. Med.">
        <title>High bone density due to a mutation in LDL-receptor-related protein 5.</title>
        <authorList>
            <person name="Boyden L.M."/>
            <person name="Mao J."/>
            <person name="Belsky J."/>
            <person name="Mitzner L."/>
            <person name="Farhi A."/>
            <person name="Mitnick M.A."/>
            <person name="Wu D."/>
            <person name="Insogna K."/>
            <person name="Lifton R.P."/>
        </authorList>
    </citation>
    <scope>VARIANT HBM VAL-171</scope>
    <scope>CHARACTERIZATION OF VARIANT HBM VAL-171</scope>
</reference>
<reference key="43">
    <citation type="journal article" date="2007" name="Osteoporos. Int.">
        <title>A novel mutation in the LRP5 gene is associated with osteoporosis-pseudoglioma syndrome.</title>
        <authorList>
            <person name="Barros E.R."/>
            <person name="Dias da Silva M.R."/>
            <person name="Kunii I.S."/>
            <person name="Hauache O.M."/>
            <person name="Lazaretti-Castro M."/>
        </authorList>
    </citation>
    <scope>VARIANT OPPG ILE-531</scope>
</reference>
<reference key="44">
    <citation type="journal article" date="2014" name="Proc. Natl. Acad. Sci. U.S.A.">
        <title>Whole-exome sequencing reveals LRP5 mutations and canonical Wnt signaling associated with hepatic cystogenesis.</title>
        <authorList>
            <person name="Cnossen W.R."/>
            <person name="te Morsche R.H."/>
            <person name="Hoischen A."/>
            <person name="Gilissen C."/>
            <person name="Chrispijn M."/>
            <person name="Venselaar H."/>
            <person name="Mehdi S."/>
            <person name="Bergmann C."/>
            <person name="Veltman J.A."/>
            <person name="Drenth J.P."/>
        </authorList>
    </citation>
    <scope>INVOLVEMENT IN PCLD4</scope>
    <scope>VARIANTS PCLD4 MET-454; TRP-1188; SER-1529 AND ASN-1551</scope>
    <scope>CHARACTERIZATION OF VARIANTS PCLD4 MET-454; TRP-1188; SER-1529 AND ASN-1551</scope>
    <scope>FUNCTION</scope>
</reference>
<reference key="45">
    <citation type="journal article" date="2017" name="Invest. Ophthalmol. Vis. Sci.">
        <title>The Genetic Causes of Nonsyndromic Congenital Retinal Detachment: A Genetic and Phenotypic Study of Pakistani Families.</title>
        <authorList>
            <person name="Keser V."/>
            <person name="Khan A."/>
            <person name="Siddiqui S."/>
            <person name="Lopez I."/>
            <person name="Ren H."/>
            <person name="Qamar R."/>
            <person name="Nadaf J."/>
            <person name="Majewski J."/>
            <person name="Chen R."/>
            <person name="Koenekoop R.K."/>
        </authorList>
    </citation>
    <scope>VARIANTS OPPG ARG-79; GLN-142; ASN-434; PRO-541; ARG-610 AND ASP-1401</scope>
</reference>
<reference key="46">
    <citation type="journal article" date="2017" name="J. Clin. Invest.">
        <title>Isolated polycystic liver disease genes define effectors of polycystin-1 function.</title>
        <authorList>
            <person name="Besse W."/>
            <person name="Dong K."/>
            <person name="Choi J."/>
            <person name="Punia S."/>
            <person name="Fedeles S.V."/>
            <person name="Choi M."/>
            <person name="Gallagher A.R."/>
            <person name="Huang E.B."/>
            <person name="Gulati A."/>
            <person name="Knight J."/>
            <person name="Mane S."/>
            <person name="Tahvanainen E."/>
            <person name="Tahvanainen P."/>
            <person name="Sanna-Cherchi S."/>
            <person name="Lifton R.P."/>
            <person name="Watnick T."/>
            <person name="Pei Y.P."/>
            <person name="Torres V.E."/>
            <person name="Somlo S."/>
        </authorList>
    </citation>
    <scope>INVOLVEMENT IN PCLD4</scope>
    <scope>VARIANTS PCLD4 GLU-638; ALA-684; CYS-925 AND MET-1541</scope>
</reference>
<gene>
    <name evidence="47 50" type="primary">LRP5</name>
    <name evidence="48" type="synonym">LR3</name>
    <name evidence="1" type="synonym">LRP7</name>
</gene>
<sequence length="1615" mass="179145">MEAAPPGPPWPLLLLLLLLLALCGCPAPAAASPLLLFANRRDVRLVDAGGVKLESTIVVSGLEDAAAVDFQFSKGAVYWTDVSEEAIKQTYLNQTGAAVQNVVISGLVSPDGLACDWVGKKLYWTDSETNRIEVANLNGTSRKVLFWQDLDQPRAIALDPAHGYMYWTDWGETPRIERAGMDGSTRKIIVDSDIYWPNGLTIDLEEQKLYWADAKLSFIHRANLDGSFRQKVVEGSLTHPFALTLSGDTLYWTDWQTRSIHACNKRTGGKRKEILSALYSPMDIQVLSQERQPFFHTRCEEDNGGCSHLCLLSPSEPFYTCACPTGVQLQDNGRTCKAGAEEVLLLARRTDLRRISLDTPDFTDIVLQVDDIRHAIAIDYDPLEGYVYWTDDEVRAIRRAYLDGSGAQTLVNTEINDPDGIAVDWVARNLYWTDTGTDRIEVTRLNGTSRKILVSEDLDEPRAIALHPVMGLMYWTDWGENPKIECANLDGQERRVLVNASLGWPNGLALDLQEGKLYWGDAKTDKIEVINVDGTKRRTLLEDKLPHIFGFTLLGDFIYWTDWQRRSIERVHKVKASRDVIIDQLPDLMGLKAVNVAKVVGTNPCADRNGGCSHLCFFTPHATRCGCPIGLELLSDMKTCIVPEAFLVFTSRAAIHRISLETNNNDVAIPLTGVKEASALDFDVSNNHIYWTDVSLKTISRAFMNGSSVEHVVEFGLDYPEGMAVDWMGKNLYWADTGTNRIEVARLDGQFRQVLVWRDLDNPRSLALDPTKGYIYWTEWGGKPRIVRAFMDGTNCMTLVDKVGRANDLTIDYADQRLYWTDLDTNMIESSNMLGQERVVIADDLPHPFGLTQYSDYIYWTDWNLHSIERADKTSGRNRTLIQGHLDFVMDILVFHSSRQDGLNDCMHNNGQCGQLCLAIPGGHRCGCASHYTLDPSSRNCSPPTTFLLFSQKSAISRMIPDDQHSPDLILPLHGLRNVKAIDYDPLDKFIYWVDGRQNIKRAKDDGTQPFVLTSLSQGQNPDRQPHDLSIDIYSRTLFWTCEATNTINVHRLSGEAMGVVLRGDRDKPRAIVVNAERGYLYFTNMQDRAAKIERAALDGTEREVLFTTGLIRPVALVVDNTLGKLFWVDADLKRIESCDLSGANRLTLEDANIVQPLGLTILGKHLYWIDRQQQMIERVEKTTGDKRTRIQGRVAHLTGIHAVEEVSLEEFSAHPCARDNGGCSHICIAKGDGTPRCSCPVHLVLLQNLLTCGEPPTCSPDQFACATGEIDCIPGAWRCDGFPECDDQSDEEGCPVCSAAQFPCARGQCVDLRLRCDGEADCQDRSDEADCDAICLPNQFRCASGQCVLIKQQCDSFPDCIDGSDELMCEITKPPSDDSPAHSSAIGPVIGIILSLFVMGGVYFVCQRVVCQRYAGANGPFPHEYVSGTPHVPLNFIAPGGSQHGPFTGIACGKSMMSSVSLMGGRGGVPLYDRNHVTGASSSSSSSTKATLYPPILNPPPSPATDPSLYNMDMFYSSNIPATARPYRPYIIRGMAPPTTPCSTDVCDSDYSASRWKASKYYLDLNSDSDPYPPPPTPHSQYLSAEDSCPPSPATERSYFHLFPPPPSPCTDSS</sequence>